<reference evidence="32 35" key="1">
    <citation type="journal article" date="1998" name="Genes Dev.">
        <title>A stress response pathway from the endoplasmic reticulum to the nucleus requires a novel bifunctional protein kinase/endoribonuclease (Ire1p) in mammalian cells.</title>
        <authorList>
            <person name="Tirasophon W."/>
            <person name="Welihinda A.A."/>
            <person name="Kaufman R.J."/>
        </authorList>
    </citation>
    <scope>NUCLEOTIDE SEQUENCE [MRNA] (ISOFORM 1)</scope>
    <scope>FUNCTION</scope>
    <scope>ACTIVITY REGULATION</scope>
    <scope>COFACTOR</scope>
    <scope>SUBCELLULAR LOCATION</scope>
    <scope>TISSUE SPECIFICITY</scope>
    <scope>AUTOPHOSPHORYLATION</scope>
    <scope>GLYCOSYLATION</scope>
    <scope>MUTAGENESIS OF LYS-599</scope>
    <source>
        <tissue evidence="35">Liver</tissue>
    </source>
</reference>
<reference key="2">
    <citation type="journal article" date="2004" name="Nat. Genet.">
        <title>Complete sequencing and characterization of 21,243 full-length human cDNAs.</title>
        <authorList>
            <person name="Ota T."/>
            <person name="Suzuki Y."/>
            <person name="Nishikawa T."/>
            <person name="Otsuki T."/>
            <person name="Sugiyama T."/>
            <person name="Irie R."/>
            <person name="Wakamatsu A."/>
            <person name="Hayashi K."/>
            <person name="Sato H."/>
            <person name="Nagai K."/>
            <person name="Kimura K."/>
            <person name="Makita H."/>
            <person name="Sekine M."/>
            <person name="Obayashi M."/>
            <person name="Nishi T."/>
            <person name="Shibahara T."/>
            <person name="Tanaka T."/>
            <person name="Ishii S."/>
            <person name="Yamamoto J."/>
            <person name="Saito K."/>
            <person name="Kawai Y."/>
            <person name="Isono Y."/>
            <person name="Nakamura Y."/>
            <person name="Nagahari K."/>
            <person name="Murakami K."/>
            <person name="Yasuda T."/>
            <person name="Iwayanagi T."/>
            <person name="Wagatsuma M."/>
            <person name="Shiratori A."/>
            <person name="Sudo H."/>
            <person name="Hosoiri T."/>
            <person name="Kaku Y."/>
            <person name="Kodaira H."/>
            <person name="Kondo H."/>
            <person name="Sugawara M."/>
            <person name="Takahashi M."/>
            <person name="Kanda K."/>
            <person name="Yokoi T."/>
            <person name="Furuya T."/>
            <person name="Kikkawa E."/>
            <person name="Omura Y."/>
            <person name="Abe K."/>
            <person name="Kamihara K."/>
            <person name="Katsuta N."/>
            <person name="Sato K."/>
            <person name="Tanikawa M."/>
            <person name="Yamazaki M."/>
            <person name="Ninomiya K."/>
            <person name="Ishibashi T."/>
            <person name="Yamashita H."/>
            <person name="Murakawa K."/>
            <person name="Fujimori K."/>
            <person name="Tanai H."/>
            <person name="Kimata M."/>
            <person name="Watanabe M."/>
            <person name="Hiraoka S."/>
            <person name="Chiba Y."/>
            <person name="Ishida S."/>
            <person name="Ono Y."/>
            <person name="Takiguchi S."/>
            <person name="Watanabe S."/>
            <person name="Yosida M."/>
            <person name="Hotuta T."/>
            <person name="Kusano J."/>
            <person name="Kanehori K."/>
            <person name="Takahashi-Fujii A."/>
            <person name="Hara H."/>
            <person name="Tanase T.-O."/>
            <person name="Nomura Y."/>
            <person name="Togiya S."/>
            <person name="Komai F."/>
            <person name="Hara R."/>
            <person name="Takeuchi K."/>
            <person name="Arita M."/>
            <person name="Imose N."/>
            <person name="Musashino K."/>
            <person name="Yuuki H."/>
            <person name="Oshima A."/>
            <person name="Sasaki N."/>
            <person name="Aotsuka S."/>
            <person name="Yoshikawa Y."/>
            <person name="Matsunawa H."/>
            <person name="Ichihara T."/>
            <person name="Shiohata N."/>
            <person name="Sano S."/>
            <person name="Moriya S."/>
            <person name="Momiyama H."/>
            <person name="Satoh N."/>
            <person name="Takami S."/>
            <person name="Terashima Y."/>
            <person name="Suzuki O."/>
            <person name="Nakagawa S."/>
            <person name="Senoh A."/>
            <person name="Mizoguchi H."/>
            <person name="Goto Y."/>
            <person name="Shimizu F."/>
            <person name="Wakebe H."/>
            <person name="Hishigaki H."/>
            <person name="Watanabe T."/>
            <person name="Sugiyama A."/>
            <person name="Takemoto M."/>
            <person name="Kawakami B."/>
            <person name="Yamazaki M."/>
            <person name="Watanabe K."/>
            <person name="Kumagai A."/>
            <person name="Itakura S."/>
            <person name="Fukuzumi Y."/>
            <person name="Fujimori Y."/>
            <person name="Komiyama M."/>
            <person name="Tashiro H."/>
            <person name="Tanigami A."/>
            <person name="Fujiwara T."/>
            <person name="Ono T."/>
            <person name="Yamada K."/>
            <person name="Fujii Y."/>
            <person name="Ozaki K."/>
            <person name="Hirao M."/>
            <person name="Ohmori Y."/>
            <person name="Kawabata A."/>
            <person name="Hikiji T."/>
            <person name="Kobatake N."/>
            <person name="Inagaki H."/>
            <person name="Ikema Y."/>
            <person name="Okamoto S."/>
            <person name="Okitani R."/>
            <person name="Kawakami T."/>
            <person name="Noguchi S."/>
            <person name="Itoh T."/>
            <person name="Shigeta K."/>
            <person name="Senba T."/>
            <person name="Matsumura K."/>
            <person name="Nakajima Y."/>
            <person name="Mizuno T."/>
            <person name="Morinaga M."/>
            <person name="Sasaki M."/>
            <person name="Togashi T."/>
            <person name="Oyama M."/>
            <person name="Hata H."/>
            <person name="Watanabe M."/>
            <person name="Komatsu T."/>
            <person name="Mizushima-Sugano J."/>
            <person name="Satoh T."/>
            <person name="Shirai Y."/>
            <person name="Takahashi Y."/>
            <person name="Nakagawa K."/>
            <person name="Okumura K."/>
            <person name="Nagase T."/>
            <person name="Nomura N."/>
            <person name="Kikuchi H."/>
            <person name="Masuho Y."/>
            <person name="Yamashita R."/>
            <person name="Nakai K."/>
            <person name="Yada T."/>
            <person name="Nakamura Y."/>
            <person name="Ohara O."/>
            <person name="Isogai T."/>
            <person name="Sugano S."/>
        </authorList>
    </citation>
    <scope>NUCLEOTIDE SEQUENCE [LARGE SCALE MRNA] (ISOFORMS 1 AND 2)</scope>
    <source>
        <tissue>Testis</tissue>
    </source>
</reference>
<reference key="3">
    <citation type="submission" date="2005-03" db="EMBL/GenBank/DDBJ databases">
        <authorList>
            <person name="Totoki Y."/>
            <person name="Toyoda A."/>
            <person name="Takeda T."/>
            <person name="Sakaki Y."/>
            <person name="Tanaka A."/>
            <person name="Yokoyama S."/>
            <person name="Ohara O."/>
            <person name="Nagase T."/>
            <person name="Kikuno R.F."/>
        </authorList>
    </citation>
    <scope>NUCLEOTIDE SEQUENCE [LARGE SCALE MRNA] (ISOFORM 1)</scope>
    <source>
        <tissue>Endothelial cell</tissue>
    </source>
</reference>
<reference key="4">
    <citation type="journal article" date="2006" name="Nature">
        <title>DNA sequence of human chromosome 17 and analysis of rearrangement in the human lineage.</title>
        <authorList>
            <person name="Zody M.C."/>
            <person name="Garber M."/>
            <person name="Adams D.J."/>
            <person name="Sharpe T."/>
            <person name="Harrow J."/>
            <person name="Lupski J.R."/>
            <person name="Nicholson C."/>
            <person name="Searle S.M."/>
            <person name="Wilming L."/>
            <person name="Young S.K."/>
            <person name="Abouelleil A."/>
            <person name="Allen N.R."/>
            <person name="Bi W."/>
            <person name="Bloom T."/>
            <person name="Borowsky M.L."/>
            <person name="Bugalter B.E."/>
            <person name="Butler J."/>
            <person name="Chang J.L."/>
            <person name="Chen C.-K."/>
            <person name="Cook A."/>
            <person name="Corum B."/>
            <person name="Cuomo C.A."/>
            <person name="de Jong P.J."/>
            <person name="DeCaprio D."/>
            <person name="Dewar K."/>
            <person name="FitzGerald M."/>
            <person name="Gilbert J."/>
            <person name="Gibson R."/>
            <person name="Gnerre S."/>
            <person name="Goldstein S."/>
            <person name="Grafham D.V."/>
            <person name="Grocock R."/>
            <person name="Hafez N."/>
            <person name="Hagopian D.S."/>
            <person name="Hart E."/>
            <person name="Norman C.H."/>
            <person name="Humphray S."/>
            <person name="Jaffe D.B."/>
            <person name="Jones M."/>
            <person name="Kamal M."/>
            <person name="Khodiyar V.K."/>
            <person name="LaButti K."/>
            <person name="Laird G."/>
            <person name="Lehoczky J."/>
            <person name="Liu X."/>
            <person name="Lokyitsang T."/>
            <person name="Loveland J."/>
            <person name="Lui A."/>
            <person name="Macdonald P."/>
            <person name="Major J.E."/>
            <person name="Matthews L."/>
            <person name="Mauceli E."/>
            <person name="McCarroll S.A."/>
            <person name="Mihalev A.H."/>
            <person name="Mudge J."/>
            <person name="Nguyen C."/>
            <person name="Nicol R."/>
            <person name="O'Leary S.B."/>
            <person name="Osoegawa K."/>
            <person name="Schwartz D.C."/>
            <person name="Shaw-Smith C."/>
            <person name="Stankiewicz P."/>
            <person name="Steward C."/>
            <person name="Swarbreck D."/>
            <person name="Venkataraman V."/>
            <person name="Whittaker C.A."/>
            <person name="Yang X."/>
            <person name="Zimmer A.R."/>
            <person name="Bradley A."/>
            <person name="Hubbard T."/>
            <person name="Birren B.W."/>
            <person name="Rogers J."/>
            <person name="Lander E.S."/>
            <person name="Nusbaum C."/>
        </authorList>
    </citation>
    <scope>NUCLEOTIDE SEQUENCE [LARGE SCALE GENOMIC DNA]</scope>
</reference>
<reference key="5">
    <citation type="submission" date="2005-09" db="EMBL/GenBank/DDBJ databases">
        <authorList>
            <person name="Mural R.J."/>
            <person name="Istrail S."/>
            <person name="Sutton G.G."/>
            <person name="Florea L."/>
            <person name="Halpern A.L."/>
            <person name="Mobarry C.M."/>
            <person name="Lippert R."/>
            <person name="Walenz B."/>
            <person name="Shatkay H."/>
            <person name="Dew I."/>
            <person name="Miller J.R."/>
            <person name="Flanigan M.J."/>
            <person name="Edwards N.J."/>
            <person name="Bolanos R."/>
            <person name="Fasulo D."/>
            <person name="Halldorsson B.V."/>
            <person name="Hannenhalli S."/>
            <person name="Turner R."/>
            <person name="Yooseph S."/>
            <person name="Lu F."/>
            <person name="Nusskern D.R."/>
            <person name="Shue B.C."/>
            <person name="Zheng X.H."/>
            <person name="Zhong F."/>
            <person name="Delcher A.L."/>
            <person name="Huson D.H."/>
            <person name="Kravitz S.A."/>
            <person name="Mouchard L."/>
            <person name="Reinert K."/>
            <person name="Remington K.A."/>
            <person name="Clark A.G."/>
            <person name="Waterman M.S."/>
            <person name="Eichler E.E."/>
            <person name="Adams M.D."/>
            <person name="Hunkapiller M.W."/>
            <person name="Myers E.W."/>
            <person name="Venter J.C."/>
        </authorList>
    </citation>
    <scope>NUCLEOTIDE SEQUENCE [LARGE SCALE GENOMIC DNA]</scope>
</reference>
<reference key="6">
    <citation type="journal article" date="2004" name="Genome Res.">
        <title>The status, quality, and expansion of the NIH full-length cDNA project: the Mammalian Gene Collection (MGC).</title>
        <authorList>
            <consortium name="The MGC Project Team"/>
        </authorList>
    </citation>
    <scope>NUCLEOTIDE SEQUENCE [LARGE SCALE MRNA] (ISOFORM 1)</scope>
    <scope>NUCLEOTIDE SEQUENCE [LARGE SCALE MRNA] OF 2-977 (ISOFORM 2)</scope>
    <source>
        <tissue>Brain</tissue>
        <tissue>Leukocyte</tissue>
    </source>
</reference>
<reference key="7">
    <citation type="journal article" date="2001" name="Cell">
        <title>XBP1 mRNA is induced by ATF6 and spliced by IRE1 in response to ER stress to produce a highly active transcription factor.</title>
        <authorList>
            <person name="Yoshida H."/>
            <person name="Matsui T."/>
            <person name="Yamamoto A."/>
            <person name="Okada T."/>
            <person name="Mori K."/>
        </authorList>
    </citation>
    <scope>FUNCTION</scope>
</reference>
<reference key="8">
    <citation type="journal article" date="2001" name="J. Biol. Chem.">
        <title>Activation of caspase-12, an endoplastic reticulum (ER) resident caspase, through tumor necrosis factor receptor-associated factor 2-dependent mechanism in response to the ER stress.</title>
        <authorList>
            <person name="Yoneda T."/>
            <person name="Imaizumi K."/>
            <person name="Oono K."/>
            <person name="Yui D."/>
            <person name="Gomi F."/>
            <person name="Katayama T."/>
            <person name="Tohyama M."/>
        </authorList>
    </citation>
    <scope>INTERACTION WITH TAOK3 AND TRAF2</scope>
</reference>
<reference evidence="32" key="9">
    <citation type="journal article" date="2001" name="Nat. Cell Biol.">
        <title>Translational control by the ER transmembrane kinase/ribonuclease IRE1 under ER stress.</title>
        <authorList>
            <person name="Iwawaki T."/>
            <person name="Hosoda A."/>
            <person name="Okuda T."/>
            <person name="Kamigori Y."/>
            <person name="Nomura-Furuwatari C."/>
            <person name="Kimata Y."/>
            <person name="Tsuru A."/>
            <person name="Kohno K."/>
        </authorList>
    </citation>
    <scope>FUNCTION</scope>
    <scope>MUTAGENESIS OF LYS-599</scope>
</reference>
<reference evidence="32" key="10">
    <citation type="journal article" date="2003" name="J. Biol. Chem.">
        <title>Structure and intermolecular interactions of the luminal dimerization domain of human IRE1alpha.</title>
        <authorList>
            <person name="Liu C.Y."/>
            <person name="Xu Z."/>
            <person name="Kaufman R.J."/>
        </authorList>
    </citation>
    <scope>FUNCTION</scope>
    <scope>HOMODIMERIZATION</scope>
    <scope>ACTIVITY REGULATION</scope>
    <scope>INTERACTION WITH HSPA5</scope>
    <scope>MUTAGENESIS OF CYS-109; CYS-148 AND CYS-332</scope>
</reference>
<reference key="11">
    <citation type="journal article" date="2009" name="Mol. Cell. Proteomics">
        <title>Large-scale proteomics analysis of the human kinome.</title>
        <authorList>
            <person name="Oppermann F.S."/>
            <person name="Gnad F."/>
            <person name="Olsen J.V."/>
            <person name="Hornberger R."/>
            <person name="Greff Z."/>
            <person name="Keri G."/>
            <person name="Mann M."/>
            <person name="Daub H."/>
        </authorList>
    </citation>
    <scope>PHOSPHORYLATION [LARGE SCALE ANALYSIS] AT THR-973</scope>
    <scope>IDENTIFICATION BY MASS SPECTROMETRY [LARGE SCALE ANALYSIS]</scope>
</reference>
<reference key="12">
    <citation type="journal article" date="2009" name="Mol. Cell">
        <title>BAX inhibitor-1 is a negative regulator of the ER stress sensor IRE1alpha.</title>
        <authorList>
            <person name="Lisbona F."/>
            <person name="Rojas-Rivera D."/>
            <person name="Thielen P."/>
            <person name="Zamorano S."/>
            <person name="Todd D."/>
            <person name="Martinon F."/>
            <person name="Glavic A."/>
            <person name="Kress C."/>
            <person name="Lin J.H."/>
            <person name="Walter P."/>
            <person name="Reed J.C."/>
            <person name="Glimcher L.H."/>
            <person name="Hetz C."/>
        </authorList>
    </citation>
    <scope>FUNCTION</scope>
    <scope>INTERACTION WITH TMBIM6</scope>
</reference>
<reference key="13">
    <citation type="journal article" date="2011" name="BMC Syst. Biol.">
        <title>Initial characterization of the human central proteome.</title>
        <authorList>
            <person name="Burkard T.R."/>
            <person name="Planyavsky M."/>
            <person name="Kaupe I."/>
            <person name="Breitwieser F.P."/>
            <person name="Buerckstuemmer T."/>
            <person name="Bennett K.L."/>
            <person name="Superti-Furga G."/>
            <person name="Colinge J."/>
        </authorList>
    </citation>
    <scope>IDENTIFICATION BY MASS SPECTROMETRY [LARGE SCALE ANALYSIS]</scope>
</reference>
<reference key="14">
    <citation type="journal article" date="2012" name="Nat. Cell Biol.">
        <title>PARP16 is a tail-anchored endoplasmic reticulum protein required for the PERK-and IRE1alpha-mediated unfolded protein response.</title>
        <authorList>
            <person name="Jwa M."/>
            <person name="Chang P."/>
        </authorList>
    </citation>
    <scope>ADP-RIBOSYLATION BY PARP16</scope>
</reference>
<reference key="15">
    <citation type="journal article" date="2017" name="Cell">
        <title>A J-Protein co-chaperone recruits bip to monomerize IRE1 and repress the unfolded protein response.</title>
        <authorList>
            <person name="Amin-Wetzel N."/>
            <person name="Saunders R.A."/>
            <person name="Kamphuis M.J."/>
            <person name="Rato C."/>
            <person name="Preissler S."/>
            <person name="Harding H.P."/>
            <person name="Ron D."/>
        </authorList>
    </citation>
    <scope>SUBUNIT</scope>
    <scope>INTERACTION WITH DNAJB9 AND HSPA5</scope>
</reference>
<reference key="16">
    <citation type="journal article" date="2013" name="J. Biol. Chem.">
        <title>RNF13, a RING finger protein, mediates endoplasmic reticulum stress-induced apoptosis through the inositol-requiring enzyme (IRE1alpha)/c-Jun NH2-terminal kinase pathway.</title>
        <authorList>
            <person name="Arshad M."/>
            <person name="Ye Z."/>
            <person name="Gu X."/>
            <person name="Wong C.K."/>
            <person name="Liu Y."/>
            <person name="Li D."/>
            <person name="Zhou L."/>
            <person name="Zhang Y."/>
            <person name="Bay W.P."/>
            <person name="Yu V.C."/>
            <person name="Li P."/>
        </authorList>
    </citation>
    <scope>INTERACTION WITH RNF13</scope>
</reference>
<reference key="17">
    <citation type="journal article" date="2019" name="Cell Rep.">
        <title>LACC1 required for NOD2-induced, ER stress-mediated innate immune outcomes in human macrophages and LACC1 risk variants modulate these outcomes.</title>
        <authorList>
            <person name="Huang C."/>
            <person name="Hedl M."/>
            <person name="Ranjan K."/>
            <person name="Abraham C."/>
        </authorList>
    </citation>
    <scope>INTERACTION WITH LACC1</scope>
</reference>
<reference key="18">
    <citation type="journal article" date="2011" name="Cell">
        <title>Rescue of DeltaF508-CFTR trafficking via a GRASP-dependent unconventional secretion pathway.</title>
        <authorList>
            <person name="Gee H.Y."/>
            <person name="Noh S.H."/>
            <person name="Tang B.L."/>
            <person name="Kim K.H."/>
            <person name="Lee M.G."/>
        </authorList>
    </citation>
    <scope>FUNCTION</scope>
</reference>
<reference key="19">
    <citation type="journal article" date="2014" name="Mol. Cell">
        <title>Protein disulfide isomerase A6 controls the decay of IRE1alpha signaling via disulfide-dependent association.</title>
        <authorList>
            <person name="Eletto D."/>
            <person name="Eletto D."/>
            <person name="Dersh D."/>
            <person name="Gidalevitz T."/>
            <person name="Argon Y."/>
        </authorList>
    </citation>
    <scope>FUNCTION</scope>
    <scope>INTERACTION WITH PDIA6</scope>
    <scope>SUBUNIT</scope>
    <scope>MUTAGENESIS OF CYS-148</scope>
</reference>
<reference key="20">
    <citation type="journal article" date="2017" name="Nat. Commun.">
        <title>A critical role of DDRGK1 in endoplasmic reticulum homoeostasis via regulation of IRE1alpha stability.</title>
        <authorList>
            <person name="Liu J."/>
            <person name="Wang Y."/>
            <person name="Song L."/>
            <person name="Zeng L."/>
            <person name="Yi W."/>
            <person name="Liu T."/>
            <person name="Chen H."/>
            <person name="Wang M."/>
            <person name="Ju Z."/>
            <person name="Cong Y.S."/>
        </authorList>
    </citation>
    <scope>FUNCTION</scope>
    <scope>INTERACTION WITH DDRGK1</scope>
    <scope>PHOSPHORYLATION</scope>
</reference>
<reference key="21">
    <citation type="journal article" date="2017" name="Sci. Rep.">
        <title>Sec16A is critical for both conventional and unconventional secretion of CFTR.</title>
        <authorList>
            <person name="Piao H."/>
            <person name="Kim J."/>
            <person name="Noh S.H."/>
            <person name="Kweon H.S."/>
            <person name="Kim J.Y."/>
            <person name="Lee M.G."/>
        </authorList>
    </citation>
    <scope>FUNCTION</scope>
</reference>
<reference key="22">
    <citation type="journal article" date="2018" name="Mol. Cell">
        <title>Coordination between Two Branches of the Unfolded Protein Response Determines Apoptotic Cell Fate.</title>
        <authorList>
            <person name="Chang T.K."/>
            <person name="Lawrence D.A."/>
            <person name="Lu M."/>
            <person name="Tan J."/>
            <person name="Harnoss J.M."/>
            <person name="Marsters S.A."/>
            <person name="Liu P."/>
            <person name="Sandoval W."/>
            <person name="Martin S.E."/>
            <person name="Ashkenazi A."/>
        </authorList>
    </citation>
    <scope>FUNCTION</scope>
    <scope>CATALYTIC ACTIVITY</scope>
    <scope>SUBUNIT</scope>
    <scope>PHOSPHORYLATION AT SER-724 AND SER-729</scope>
</reference>
<reference key="23">
    <citation type="journal article" date="2020" name="EMBO J.">
        <title>Phosphorylation switches protein disulfide isomerase activity to maintain proteostasis and attenuate ER stress.</title>
        <authorList>
            <person name="Yu J."/>
            <person name="Li T."/>
            <person name="Liu Y."/>
            <person name="Wang X."/>
            <person name="Zhang J."/>
            <person name="Wang X."/>
            <person name="Shi G."/>
            <person name="Lou J."/>
            <person name="Wang L."/>
            <person name="Wang C.C."/>
            <person name="Wang L."/>
        </authorList>
    </citation>
    <scope>INTERACTION WITH P4HB</scope>
    <scope>MUTAGENESIS OF CYS-109; CYS-148 AND CYS-332</scope>
</reference>
<reference key="24">
    <citation type="journal article" date="2023" name="Cell Rep.">
        <title>MANF regulates neuronal survival and UPR through its ER-located receptor IRE1alpha.</title>
        <authorList>
            <person name="Kovaleva V."/>
            <person name="Yu L.Y."/>
            <person name="Ivanova L."/>
            <person name="Shpironok O."/>
            <person name="Nam J."/>
            <person name="Eesmaa A."/>
            <person name="Kumpula E.P."/>
            <person name="Sakson S."/>
            <person name="Toots U."/>
            <person name="Ustav M."/>
            <person name="Huiskonen J.T."/>
            <person name="Voutilainen M.H."/>
            <person name="Lindholm P."/>
            <person name="Karelson M."/>
            <person name="Saarma M."/>
        </authorList>
    </citation>
    <scope>FUNCTION</scope>
    <scope>INTERACTION WITH MANF AND HSPA5</scope>
    <scope>INDUCTION</scope>
    <scope>PHOSPHORYLATION AT SER-724</scope>
</reference>
<reference evidence="37" key="25">
    <citation type="journal article" date="2006" name="Proc. Natl. Acad. Sci. U.S.A.">
        <title>The crystal structure of human IRE1 luminal domain reveals a conserved dimerization interface required for activation of the unfolded protein response.</title>
        <authorList>
            <person name="Zhou J."/>
            <person name="Liu C.Y."/>
            <person name="Back S.H."/>
            <person name="Clark R.L."/>
            <person name="Peisach D."/>
            <person name="Xu Z."/>
            <person name="Kaufman R.J."/>
        </authorList>
    </citation>
    <scope>X-RAY CRYSTALLOGRAPHY (3.1 ANGSTROMS) OF 24-390</scope>
    <scope>SUBUNIT</scope>
    <scope>MUTAGENESIS OF GLN-105; ASP-123 AND TRP-125</scope>
</reference>
<reference evidence="38" key="26">
    <citation type="journal article" date="2011" name="EMBO J.">
        <title>Structure of the Ire1 autophosphorylation complex and implications for the unfolded protein response.</title>
        <authorList>
            <person name="Ali M.M."/>
            <person name="Bagratuni T."/>
            <person name="Davenport E.L."/>
            <person name="Nowak P.R."/>
            <person name="Silva-Santisteban M.C."/>
            <person name="Hardcastle A."/>
            <person name="McAndrews C."/>
            <person name="Rowlands M.G."/>
            <person name="Morgan G.J."/>
            <person name="Aherne W."/>
            <person name="Collins I."/>
            <person name="Davies F.E."/>
            <person name="Pearl L.H."/>
        </authorList>
    </citation>
    <scope>X-RAY CRYSTALLOGRAPHY (2.70 ANGSTROMS) OF 547-977 IN COMPLEX WITH ADP</scope>
    <scope>FUNCTION</scope>
    <scope>CATALYTIC ACTIVITY</scope>
    <scope>ACTIVITY REGULATION</scope>
    <scope>AUTOPHOSPHORYLATION</scope>
    <scope>COFACTOR</scope>
</reference>
<reference key="27">
    <citation type="journal article" date="2007" name="Nature">
        <title>Patterns of somatic mutation in human cancer genomes.</title>
        <authorList>
            <person name="Greenman C."/>
            <person name="Stephens P."/>
            <person name="Smith R."/>
            <person name="Dalgliesh G.L."/>
            <person name="Hunter C."/>
            <person name="Bignell G."/>
            <person name="Davies H."/>
            <person name="Teague J."/>
            <person name="Butler A."/>
            <person name="Stevens C."/>
            <person name="Edkins S."/>
            <person name="O'Meara S."/>
            <person name="Vastrik I."/>
            <person name="Schmidt E.E."/>
            <person name="Avis T."/>
            <person name="Barthorpe S."/>
            <person name="Bhamra G."/>
            <person name="Buck G."/>
            <person name="Choudhury B."/>
            <person name="Clements J."/>
            <person name="Cole J."/>
            <person name="Dicks E."/>
            <person name="Forbes S."/>
            <person name="Gray K."/>
            <person name="Halliday K."/>
            <person name="Harrison R."/>
            <person name="Hills K."/>
            <person name="Hinton J."/>
            <person name="Jenkinson A."/>
            <person name="Jones D."/>
            <person name="Menzies A."/>
            <person name="Mironenko T."/>
            <person name="Perry J."/>
            <person name="Raine K."/>
            <person name="Richardson D."/>
            <person name="Shepherd R."/>
            <person name="Small A."/>
            <person name="Tofts C."/>
            <person name="Varian J."/>
            <person name="Webb T."/>
            <person name="West S."/>
            <person name="Widaa S."/>
            <person name="Yates A."/>
            <person name="Cahill D.P."/>
            <person name="Louis D.N."/>
            <person name="Goldstraw P."/>
            <person name="Nicholson A.G."/>
            <person name="Brasseur F."/>
            <person name="Looijenga L."/>
            <person name="Weber B.L."/>
            <person name="Chiew Y.-E."/>
            <person name="DeFazio A."/>
            <person name="Greaves M.F."/>
            <person name="Green A.R."/>
            <person name="Campbell P."/>
            <person name="Birney E."/>
            <person name="Easton D.F."/>
            <person name="Chenevix-Trench G."/>
            <person name="Tan M.-H."/>
            <person name="Khoo S.K."/>
            <person name="Teh B.T."/>
            <person name="Yuen S.T."/>
            <person name="Leung S.Y."/>
            <person name="Wooster R."/>
            <person name="Futreal P.A."/>
            <person name="Stratton M.R."/>
        </authorList>
    </citation>
    <scope>VARIANTS [LARGE SCALE ANALYSIS] SER-244; MET-418; ARG-474; TRP-635; SER-700; PHE-769 AND LEU-830</scope>
</reference>
<comment type="function">
    <text evidence="8 10 11 14 15 16 20 21 23 26 27 33">Serine/threonine-protein kinase and endoribonuclease that acts as a key sensor for the endoplasmic reticulum unfolded protein response (UPR) (PubMed:11175748, PubMed:11779464, PubMed:12637535, PubMed:19328063, PubMed:21317875, PubMed:28128204, PubMed:30118681, PubMed:36739529, PubMed:9637683). In unstressed cells, the endoplasmic reticulum luminal domain is maintained in its inactive monomeric state by binding to the endoplasmic reticulum chaperone HSPA5/BiP (PubMed:21317875). Accumulation of misfolded proteins in the endoplasmic reticulum causes release of HSPA5/BiP, allowing the luminal domain to homodimerize, promoting autophosphorylation of the kinase domain and subsequent activation of the endoribonuclease activity (PubMed:21317875). The endoribonuclease activity is specific for XBP1 mRNA and excises 26 nucleotides from XBP1 mRNA (PubMed:11779464, PubMed:21317875, PubMed:24508390). The resulting spliced transcript of XBP1 encodes a transcriptional activator protein that up-regulates expression of UPR target genes (PubMed:11779464, PubMed:21317875, PubMed:24508390). Acts as an upstream signal for ER stress-induced GORASP2-mediated unconventional (ER/Golgi-independent) trafficking of CFTR to cell membrane by modulating the expression and localization of SEC16A (PubMed:21884936, PubMed:28067262).</text>
</comment>
<comment type="catalytic activity">
    <reaction evidence="15 27">
        <text>L-seryl-[protein] + ATP = O-phospho-L-seryl-[protein] + ADP + H(+)</text>
        <dbReference type="Rhea" id="RHEA:17989"/>
        <dbReference type="Rhea" id="RHEA-COMP:9863"/>
        <dbReference type="Rhea" id="RHEA-COMP:11604"/>
        <dbReference type="ChEBI" id="CHEBI:15378"/>
        <dbReference type="ChEBI" id="CHEBI:29999"/>
        <dbReference type="ChEBI" id="CHEBI:30616"/>
        <dbReference type="ChEBI" id="CHEBI:83421"/>
        <dbReference type="ChEBI" id="CHEBI:456216"/>
        <dbReference type="EC" id="2.7.11.1"/>
    </reaction>
</comment>
<comment type="catalytic activity">
    <reaction evidence="15 27">
        <text>L-threonyl-[protein] + ATP = O-phospho-L-threonyl-[protein] + ADP + H(+)</text>
        <dbReference type="Rhea" id="RHEA:46608"/>
        <dbReference type="Rhea" id="RHEA-COMP:11060"/>
        <dbReference type="Rhea" id="RHEA-COMP:11605"/>
        <dbReference type="ChEBI" id="CHEBI:15378"/>
        <dbReference type="ChEBI" id="CHEBI:30013"/>
        <dbReference type="ChEBI" id="CHEBI:30616"/>
        <dbReference type="ChEBI" id="CHEBI:61977"/>
        <dbReference type="ChEBI" id="CHEBI:456216"/>
        <dbReference type="EC" id="2.7.11.1"/>
    </reaction>
</comment>
<comment type="cofactor">
    <cofactor evidence="15 27">
        <name>Mg(2+)</name>
        <dbReference type="ChEBI" id="CHEBI:18420"/>
    </cofactor>
</comment>
<comment type="activity regulation">
    <text evidence="2 11 27">The kinase domain is activated by trans-autophosphorylation following homodimerization (PubMed:12637535, PubMed:9637683). Kinase activity is required for activation of the endoribonuclease domain (PubMed:12637535, PubMed:9637683). Endoribonuclease activity is specifically inhibited by hydroxy-aryl-aldehydes (HAA) (By similarity).</text>
</comment>
<comment type="subunit">
    <text evidence="2 9 11 12 14 15 18 19 21 22 23 24 25 26">Monomer (PubMed:16973740, PubMed:29198525). Homodimer; disulfide-linked; homodimerization takes place in response to endoplasmic reticulum stress and promotes activation of the kinase and endoribonuclease activities (PubMed:12637535, PubMed:16973740, PubMed:21317875, PubMed:24508390, PubMed:30118681). Dimer formation is driven by hydrophobic interactions within the N-terminal luminal domains and stabilized by disulfide bridges (PubMed:12637535). Interacts (via the luminal region) with DNAJB9/ERdj4; interaction takes place in unstressed cells and promotes recruitment of HSPA5/BiP (PubMed:29198525). Interacts (via the luminal region) with HSPA5/BiP; HSPA5/BiP is a negative regulator of the unfolded protein response (UPR) that prevents homodimerization of ERN1/IRE1 and subsequent activation of the protein (PubMed:12637535, PubMed:29198525, PubMed:36739529). Interaction with HSPA5 also competitively inhibits ERN1 interaction with MANF (PubMed:36739529). Interacts with PDIA6, a negative regulator of the UPR; the interaction is direct and disrupts homodimerization (PubMed:24508390). Interacts with DAB2IP (via PH domain); the interaction occurs in a endoplasmic reticulum stress-induced dependent manner and is required for subsequent recruitment of TRAF2 to ERN1/IRE1 (By similarity). Interacts with TAOK3 and TRAF2 (PubMed:11278723). Interacts with RNF13 (PubMed:23378536). Interacts with LACC1 (PubMed:31875558). Interacts (when unphosphorylated) with DDRGK1; interaction is dependent on UFM1 and takes place in response to endoplasmic reticulum stress, regulating ERN1/IRE1-alpha stability (PubMed:28128204). Interacts (via N-terminus) with P4HB/PDIA1; the interaction is enhanced by phosphorylation of P4HB by FAM20C in response to endoplasmic reticulum stress and results in attenuation of ERN1 activity (PubMed:32149426). Interacts with TMBIM6; this interaction inhibits ERN1 activity (PubMed:19328063). Interacts (via luminal domain) with MANF (via C-terminus); the interaction is decreased in the presence of increasing concentrations of Ca(2+) (PubMed:36739529).</text>
</comment>
<comment type="interaction">
    <interactant intactId="EBI-371750">
        <id>O75460</id>
    </interactant>
    <interactant intactId="EBI-516580">
        <id>Q07812</id>
        <label>BAX</label>
    </interactant>
    <organismsDiffer>false</organismsDiffer>
    <experiments>2</experiments>
</comment>
<comment type="interaction">
    <interactant intactId="EBI-371750">
        <id>O75460</id>
    </interactant>
    <interactant intactId="EBI-371750">
        <id>O75460</id>
        <label>ERN1</label>
    </interactant>
    <organismsDiffer>false</organismsDiffer>
    <experiments>2</experiments>
</comment>
<comment type="interaction">
    <interactant intactId="EBI-371750">
        <id>O75460</id>
    </interactant>
    <interactant intactId="EBI-354921">
        <id>P11021</id>
        <label>HSPA5</label>
    </interactant>
    <organismsDiffer>false</organismsDiffer>
    <experiments>3</experiments>
</comment>
<comment type="interaction">
    <interactant intactId="EBI-371750">
        <id>O75460</id>
    </interactant>
    <interactant intactId="EBI-947849">
        <id>Q86TM6</id>
        <label>SYVN1</label>
    </interactant>
    <organismsDiffer>false</organismsDiffer>
    <experiments>2</experiments>
</comment>
<comment type="interaction">
    <interactant intactId="EBI-371750">
        <id>O75460</id>
    </interactant>
    <interactant intactId="EBI-1384100">
        <id>Q9H2K8</id>
        <label>TAOK3</label>
    </interactant>
    <organismsDiffer>false</organismsDiffer>
    <experiments>3</experiments>
</comment>
<comment type="interaction">
    <interactant intactId="EBI-371750">
        <id>O75460</id>
    </interactant>
    <interactant intactId="EBI-355744">
        <id>Q12933</id>
        <label>TRAF2</label>
    </interactant>
    <organismsDiffer>false</organismsDiffer>
    <experiments>3</experiments>
</comment>
<comment type="interaction">
    <interactant intactId="EBI-371750">
        <id>O75460</id>
    </interactant>
    <interactant intactId="EBI-2124787">
        <id>Q969M3</id>
        <label>YIPF5</label>
    </interactant>
    <organismsDiffer>false</organismsDiffer>
    <experiments>3</experiments>
</comment>
<comment type="interaction">
    <interactant intactId="EBI-371750">
        <id>O75460</id>
    </interactant>
    <interactant intactId="EBI-822441">
        <id>O08734</id>
        <label>Bak1</label>
    </interactant>
    <organismsDiffer>true</organismsDiffer>
    <experiments>2</experiments>
</comment>
<comment type="interaction">
    <interactant intactId="EBI-371750">
        <id>O75460</id>
    </interactant>
    <interactant intactId="EBI-700711">
        <id>Q07813</id>
        <label>Bax</label>
    </interactant>
    <organismsDiffer>true</organismsDiffer>
    <experiments>2</experiments>
</comment>
<comment type="interaction">
    <interactant intactId="EBI-371750">
        <id>O75460</id>
    </interactant>
    <interactant intactId="EBI-772325">
        <id>P20029</id>
        <label>Hspa5</label>
    </interactant>
    <organismsDiffer>true</organismsDiffer>
    <experiments>2</experiments>
</comment>
<comment type="interaction">
    <interactant intactId="EBI-15600828">
        <id>O75460-1</id>
    </interactant>
    <interactant intactId="EBI-15600828">
        <id>O75460-1</id>
        <label>ERN1</label>
    </interactant>
    <organismsDiffer>false</organismsDiffer>
    <experiments>5</experiments>
</comment>
<comment type="interaction">
    <interactant intactId="EBI-15600828">
        <id>O75460-1</id>
    </interactant>
    <interactant intactId="EBI-354921">
        <id>P11021</id>
        <label>HSPA5</label>
    </interactant>
    <organismsDiffer>false</organismsDiffer>
    <experiments>4</experiments>
</comment>
<comment type="interaction">
    <interactant intactId="EBI-15600828">
        <id>O75460-1</id>
    </interactant>
    <interactant intactId="EBI-725454">
        <id>Q13438</id>
        <label>OS9</label>
    </interactant>
    <organismsDiffer>false</organismsDiffer>
    <experiments>2</experiments>
</comment>
<comment type="interaction">
    <interactant intactId="EBI-15600828">
        <id>O75460-1</id>
    </interactant>
    <interactant intactId="EBI-358766">
        <id>Q9UBV2</id>
        <label>SEL1L</label>
    </interactant>
    <organismsDiffer>false</organismsDiffer>
    <experiments>2</experiments>
</comment>
<comment type="interaction">
    <interactant intactId="EBI-15600828">
        <id>O75460-1</id>
    </interactant>
    <interactant intactId="EBI-947849">
        <id>Q86TM6</id>
        <label>SYVN1</label>
    </interactant>
    <organismsDiffer>false</organismsDiffer>
    <experiments>3</experiments>
</comment>
<comment type="interaction">
    <interactant intactId="EBI-25852368">
        <id>O75460-2</id>
    </interactant>
    <interactant intactId="EBI-18899653">
        <id>Q6DHV7-2</id>
        <label>ADAL</label>
    </interactant>
    <organismsDiffer>false</organismsDiffer>
    <experiments>3</experiments>
</comment>
<comment type="interaction">
    <interactant intactId="EBI-25852368">
        <id>O75460-2</id>
    </interactant>
    <interactant intactId="EBI-8466265">
        <id>Q96MA6</id>
        <label>AK8</label>
    </interactant>
    <organismsDiffer>false</organismsDiffer>
    <experiments>3</experiments>
</comment>
<comment type="interaction">
    <interactant intactId="EBI-25852368">
        <id>O75460-2</id>
    </interactant>
    <interactant intactId="EBI-5280499">
        <id>Q66PJ3-4</id>
        <label>ARL6IP4</label>
    </interactant>
    <organismsDiffer>false</organismsDiffer>
    <experiments>3</experiments>
</comment>
<comment type="interaction">
    <interactant intactId="EBI-25852368">
        <id>O75460-2</id>
    </interactant>
    <interactant intactId="EBI-540797">
        <id>Q9UBL3</id>
        <label>ASH2L</label>
    </interactant>
    <organismsDiffer>false</organismsDiffer>
    <experiments>3</experiments>
</comment>
<comment type="interaction">
    <interactant intactId="EBI-25852368">
        <id>O75460-2</id>
    </interactant>
    <interactant intactId="EBI-9089489">
        <id>Q96FT7-4</id>
        <label>ASIC4</label>
    </interactant>
    <organismsDiffer>false</organismsDiffer>
    <experiments>3</experiments>
</comment>
<comment type="interaction">
    <interactant intactId="EBI-25852368">
        <id>O75460-2</id>
    </interactant>
    <interactant intactId="EBI-742750">
        <id>Q8TBE0</id>
        <label>BAHD1</label>
    </interactant>
    <organismsDiffer>false</organismsDiffer>
    <experiments>3</experiments>
</comment>
<comment type="interaction">
    <interactant intactId="EBI-25852368">
        <id>O75460-2</id>
    </interactant>
    <interactant intactId="EBI-12300031">
        <id>Q9NNX6-10</id>
        <label>CD209</label>
    </interactant>
    <organismsDiffer>false</organismsDiffer>
    <experiments>3</experiments>
</comment>
<comment type="interaction">
    <interactant intactId="EBI-25852368">
        <id>O75460-2</id>
    </interactant>
    <interactant intactId="EBI-375077">
        <id>P38936</id>
        <label>CDKN1A</label>
    </interactant>
    <organismsDiffer>false</organismsDiffer>
    <experiments>3</experiments>
</comment>
<comment type="interaction">
    <interactant intactId="EBI-25852368">
        <id>O75460-2</id>
    </interactant>
    <interactant intactId="EBI-11526226">
        <id>Q96EY1-3</id>
        <label>DNAJA3</label>
    </interactant>
    <organismsDiffer>false</organismsDiffer>
    <experiments>3</experiments>
</comment>
<comment type="interaction">
    <interactant intactId="EBI-25852368">
        <id>O75460-2</id>
    </interactant>
    <interactant intactId="EBI-23669343">
        <id>Q92782-2</id>
        <label>DPF1</label>
    </interactant>
    <organismsDiffer>false</organismsDiffer>
    <experiments>3</experiments>
</comment>
<comment type="interaction">
    <interactant intactId="EBI-25852368">
        <id>O75460-2</id>
    </interactant>
    <interactant intactId="EBI-372173">
        <id>O77932</id>
        <label>DXO</label>
    </interactant>
    <organismsDiffer>false</organismsDiffer>
    <experiments>3</experiments>
</comment>
<comment type="interaction">
    <interactant intactId="EBI-25852368">
        <id>O75460-2</id>
    </interactant>
    <interactant intactId="EBI-618189">
        <id>Q06547-2</id>
        <label>GABPB1</label>
    </interactant>
    <organismsDiffer>false</organismsDiffer>
    <experiments>3</experiments>
</comment>
<comment type="interaction">
    <interactant intactId="EBI-25852368">
        <id>O75460-2</id>
    </interactant>
    <interactant intactId="EBI-9088619">
        <id>Q06547-3</id>
        <label>GABPB1</label>
    </interactant>
    <organismsDiffer>false</organismsDiffer>
    <experiments>3</experiments>
</comment>
<comment type="interaction">
    <interactant intactId="EBI-25852368">
        <id>O75460-2</id>
    </interactant>
    <interactant intactId="EBI-389518">
        <id>P52655</id>
        <label>GTF2A1</label>
    </interactant>
    <organismsDiffer>false</organismsDiffer>
    <experiments>3</experiments>
</comment>
<comment type="interaction">
    <interactant intactId="EBI-25852368">
        <id>O75460-2</id>
    </interactant>
    <interactant intactId="EBI-6509505">
        <id>Q0VD86</id>
        <label>INCA1</label>
    </interactant>
    <organismsDiffer>false</organismsDiffer>
    <experiments>3</experiments>
</comment>
<comment type="interaction">
    <interactant intactId="EBI-25852368">
        <id>O75460-2</id>
    </interactant>
    <interactant intactId="EBI-1052558">
        <id>Q92615</id>
        <label>LARP4B</label>
    </interactant>
    <organismsDiffer>false</organismsDiffer>
    <experiments>3</experiments>
</comment>
<comment type="interaction">
    <interactant intactId="EBI-25852368">
        <id>O75460-2</id>
    </interactant>
    <interactant intactId="EBI-2802743">
        <id>Q6PHZ7</id>
        <label>NR2C2</label>
    </interactant>
    <organismsDiffer>false</organismsDiffer>
    <experiments>3</experiments>
</comment>
<comment type="interaction">
    <interactant intactId="EBI-25852368">
        <id>O75460-2</id>
    </interactant>
    <interactant intactId="EBI-25830200">
        <id>Q6GQQ9-2</id>
        <label>OTUD7B</label>
    </interactant>
    <organismsDiffer>false</organismsDiffer>
    <experiments>3</experiments>
</comment>
<comment type="interaction">
    <interactant intactId="EBI-25852368">
        <id>O75460-2</id>
    </interactant>
    <interactant intactId="EBI-25852006">
        <id>Q8N2H9-4</id>
        <label>PELI3</label>
    </interactant>
    <organismsDiffer>false</organismsDiffer>
    <experiments>3</experiments>
</comment>
<comment type="interaction">
    <interactant intactId="EBI-25852368">
        <id>O75460-2</id>
    </interactant>
    <interactant intactId="EBI-2557276">
        <id>O15534</id>
        <label>PER1</label>
    </interactant>
    <organismsDiffer>false</organismsDiffer>
    <experiments>3</experiments>
</comment>
<comment type="interaction">
    <interactant intactId="EBI-25852368">
        <id>O75460-2</id>
    </interactant>
    <interactant intactId="EBI-21503705">
        <id>Q58EX7-2</id>
        <label>PLEKHG4</label>
    </interactant>
    <organismsDiffer>false</organismsDiffer>
    <experiments>3</experiments>
</comment>
<comment type="interaction">
    <interactant intactId="EBI-25852368">
        <id>O75460-2</id>
    </interactant>
    <interactant intactId="EBI-26412802">
        <id>Q5SXH7-1</id>
        <label>PLEKHS1</label>
    </interactant>
    <organismsDiffer>false</organismsDiffer>
    <experiments>3</experiments>
</comment>
<comment type="interaction">
    <interactant intactId="EBI-25852368">
        <id>O75460-2</id>
    </interactant>
    <interactant intactId="EBI-712752">
        <id>Q14181</id>
        <label>POLA2</label>
    </interactant>
    <organismsDiffer>false</organismsDiffer>
    <experiments>3</experiments>
</comment>
<comment type="interaction">
    <interactant intactId="EBI-25852368">
        <id>O75460-2</id>
    </interactant>
    <interactant intactId="EBI-13292283">
        <id>Q9UHI5</id>
        <label>SLC7A8</label>
    </interactant>
    <organismsDiffer>false</organismsDiffer>
    <experiments>3</experiments>
</comment>
<comment type="interaction">
    <interactant intactId="EBI-25852368">
        <id>O75460-2</id>
    </interactant>
    <interactant intactId="EBI-3929549">
        <id>O14544</id>
        <label>SOCS6</label>
    </interactant>
    <organismsDiffer>false</organismsDiffer>
    <experiments>3</experiments>
</comment>
<comment type="interaction">
    <interactant intactId="EBI-25852368">
        <id>O75460-2</id>
    </interactant>
    <interactant intactId="EBI-3923692">
        <id>Q496A3</id>
        <label>SPATS1</label>
    </interactant>
    <organismsDiffer>false</organismsDiffer>
    <experiments>3</experiments>
</comment>
<comment type="interaction">
    <interactant intactId="EBI-25852368">
        <id>O75460-2</id>
    </interactant>
    <interactant intactId="EBI-9089156">
        <id>Q8IUR5-4</id>
        <label>TMTC1</label>
    </interactant>
    <organismsDiffer>false</organismsDiffer>
    <experiments>3</experiments>
</comment>
<comment type="interaction">
    <interactant intactId="EBI-25852368">
        <id>O75460-2</id>
    </interactant>
    <interactant intactId="EBI-2339348">
        <id>P49459</id>
        <label>UBE2A</label>
    </interactant>
    <organismsDiffer>false</organismsDiffer>
    <experiments>3</experiments>
</comment>
<comment type="interaction">
    <interactant intactId="EBI-25852368">
        <id>O75460-2</id>
    </interactant>
    <interactant intactId="EBI-10316321">
        <id>Q9NX94</id>
        <label>WBP1L</label>
    </interactant>
    <organismsDiffer>false</organismsDiffer>
    <experiments>3</experiments>
</comment>
<comment type="interaction">
    <interactant intactId="EBI-25852368">
        <id>O75460-2</id>
    </interactant>
    <interactant intactId="EBI-16435478">
        <id>Q9BYN7-2</id>
        <label>ZNF341</label>
    </interactant>
    <organismsDiffer>false</organismsDiffer>
    <experiments>3</experiments>
</comment>
<comment type="interaction">
    <interactant intactId="EBI-25852368">
        <id>O75460-2</id>
    </interactant>
    <interactant intactId="EBI-18036029">
        <id>Q3KNS6-3</id>
        <label>ZNF829</label>
    </interactant>
    <organismsDiffer>false</organismsDiffer>
    <experiments>3</experiments>
</comment>
<comment type="interaction">
    <interactant intactId="EBI-25852368">
        <id>O75460-2</id>
    </interactant>
    <interactant intactId="EBI-1054417">
        <id>Q9BRT8</id>
        <label>ZNG1A</label>
    </interactant>
    <organismsDiffer>false</organismsDiffer>
    <experiments>3</experiments>
</comment>
<comment type="subcellular location">
    <subcellularLocation>
        <location evidence="27">Endoplasmic reticulum membrane</location>
        <topology evidence="27">Single-pass type I membrane protein</topology>
    </subcellularLocation>
</comment>
<comment type="alternative products">
    <event type="alternative splicing"/>
    <isoform>
        <id>O75460-1</id>
        <name>1</name>
        <sequence type="displayed"/>
    </isoform>
    <isoform>
        <id>O75460-2</id>
        <name>2</name>
        <sequence type="described" ref="VSP_034582 VSP_034583"/>
    </isoform>
</comment>
<comment type="tissue specificity">
    <text evidence="27">Ubiquitously expressed. High levels observed in pancreatic tissue.</text>
</comment>
<comment type="induction">
    <text evidence="26">Induced by the ER stressor tunicamycin.</text>
</comment>
<comment type="PTM">
    <text evidence="11 15 21 23 26 27">Autophosphorylated following homodimerization. Autophosphorylation promotes activation of the endoribonuclease domain (PubMed:12637535, PubMed:21317875, PubMed:28128204, PubMed:9637683). In response to ER stress, phosphorylated at Ser-724, Ser-729 and possibly Ser-726; phosphorylation promotes oligomerization and endoribonuclease activity (PubMed:30118681). Dephosphorylated at Ser-724, Ser-729 and possibly Ser-726 by RPAP2 to abort failed ER-stress adaptation and trigger apoptosis (PubMed:30118681). Phosphorylated at Ser-724; in response to the ER stressor tunicamycin (PubMed:36739529).</text>
</comment>
<comment type="PTM">
    <text evidence="17">ADP-ribosylated by PARP16 upon ER stress, which increases both kinase and endonuclease activities.</text>
</comment>
<comment type="similarity">
    <text evidence="4">Belongs to the protein kinase superfamily. Ser/Thr protein kinase family.</text>
</comment>
<name>ERN1_HUMAN</name>
<protein>
    <recommendedName>
        <fullName evidence="32">Serine/threonine-protein kinase/endoribonuclease IRE1</fullName>
    </recommendedName>
    <alternativeName>
        <fullName evidence="31">Endoplasmic reticulum-to-nucleus signaling 1</fullName>
    </alternativeName>
    <alternativeName>
        <fullName evidence="31">Inositol-requiring protein 1</fullName>
        <shortName evidence="31">hIRE1p</shortName>
    </alternativeName>
    <alternativeName>
        <fullName evidence="28">Ire1-alpha</fullName>
        <shortName evidence="28">IRE1a</shortName>
    </alternativeName>
    <domain>
        <recommendedName>
            <fullName>Serine/threonine-protein kinase</fullName>
            <ecNumber evidence="15 27">2.7.11.1</ecNumber>
        </recommendedName>
    </domain>
    <domain>
        <recommendedName>
            <fullName>Endoribonuclease</fullName>
            <ecNumber evidence="15 34">3.1.26.-</ecNumber>
        </recommendedName>
    </domain>
</protein>
<proteinExistence type="evidence at protein level"/>
<keyword id="KW-0002">3D-structure</keyword>
<keyword id="KW-0013">ADP-ribosylation</keyword>
<keyword id="KW-0025">Alternative splicing</keyword>
<keyword id="KW-0053">Apoptosis</keyword>
<keyword id="KW-0067">ATP-binding</keyword>
<keyword id="KW-1015">Disulfide bond</keyword>
<keyword id="KW-0256">Endoplasmic reticulum</keyword>
<keyword id="KW-0325">Glycoprotein</keyword>
<keyword id="KW-0378">Hydrolase</keyword>
<keyword id="KW-0418">Kinase</keyword>
<keyword id="KW-0460">Magnesium</keyword>
<keyword id="KW-0472">Membrane</keyword>
<keyword id="KW-0479">Metal-binding</keyword>
<keyword id="KW-0511">Multifunctional enzyme</keyword>
<keyword id="KW-0547">Nucleotide-binding</keyword>
<keyword id="KW-0597">Phosphoprotein</keyword>
<keyword id="KW-1267">Proteomics identification</keyword>
<keyword id="KW-1185">Reference proteome</keyword>
<keyword id="KW-0723">Serine/threonine-protein kinase</keyword>
<keyword id="KW-0732">Signal</keyword>
<keyword id="KW-0804">Transcription</keyword>
<keyword id="KW-0805">Transcription regulation</keyword>
<keyword id="KW-0808">Transferase</keyword>
<keyword id="KW-0812">Transmembrane</keyword>
<keyword id="KW-1133">Transmembrane helix</keyword>
<keyword id="KW-0834">Unfolded protein response</keyword>
<sequence>MPARRLLLLLTLLLPGLGIFGSTSTVTLPETLLFVSTLDGSLHAVSKRTGSIKWTLKEDPVLQVPTHVEEPAFLPDPNDGSLYTLGSKNNEGLTKLPFTIPELVQASPCRSSDGILYMGKKQDIWYVIDLLTGEKQQTLSSAFADSLCPSTSLLYLGRTEYTITMYDTKTRELRWNATYFDYAASLPEDDVDYKMSHFVSNGDGLVVTVDSESGDVLWIQNYASPVVAFYVWQREGLRKVMHINVAVETLRYLTFMSGEVGRITKWKYPFPKETEAKSKLTPTLYVGKYSTSLYASPSMVHEGVAVVPRGSTLPLLEGPQTDGVTIGDKGECVITPSTDVKFDPGLKSKNKLNYLRNYWLLIGHHETPLSASTKMLERFPNNLPKHRENVIPADSEKKSFEEVINLVDQTSENAPTTVSRDVEEKPAHAPARPEAPVDSMLKDMATIILSTFLLIGWVAFIITYPLSMHQQQQLQHQQFQKELEKIQLLQQQQQQLPFHPPGDTAQDGELLDTSGPYSESSGTSSPSTSPRASNHSLCSGSSASKAGSSPSLEQDDGDEETSVVIVGKISFCPKDVLGHGAEGTIVYRGMFDNRDVAVKRILPECFSFADREVQLLRESDEHPNVIRYFCTEKDRQFQYIAIELCAATLQEYVEQKDFAHLGLEPITLLQQTTSGLAHLHSLNIVHRDLKPHNILISMPNAHGKIKAMISDFGLCKKLAVGRHSFSRRSGVPGTEGWIAPEMLSEDCKENPTYTVDIFSAGCVFYYVISEGSHPFGKSLQRQANILLGACSLDCLHPEKHEDVIARELIEKMIAMDPQKRPSAKHVLKHPFFWSLEKQLQFFQDVSDRIEKESLDGPIVKQLERGGRAVVKMDWRENITVPLQTDLRKFRTYKGGSVRDLLRAMRNKKHHYRELPAEVRETLGSLPDDFVCYFTSRFPHLLAHTYRAMELCSHERLFQPYYFHEPPEPQPPVTPDAL</sequence>
<gene>
    <name evidence="36" type="primary">ERN1</name>
    <name evidence="35" type="synonym">IRE1</name>
</gene>
<organism>
    <name type="scientific">Homo sapiens</name>
    <name type="common">Human</name>
    <dbReference type="NCBI Taxonomy" id="9606"/>
    <lineage>
        <taxon>Eukaryota</taxon>
        <taxon>Metazoa</taxon>
        <taxon>Chordata</taxon>
        <taxon>Craniata</taxon>
        <taxon>Vertebrata</taxon>
        <taxon>Euteleostomi</taxon>
        <taxon>Mammalia</taxon>
        <taxon>Eutheria</taxon>
        <taxon>Euarchontoglires</taxon>
        <taxon>Primates</taxon>
        <taxon>Haplorrhini</taxon>
        <taxon>Catarrhini</taxon>
        <taxon>Hominidae</taxon>
        <taxon>Homo</taxon>
    </lineage>
</organism>
<dbReference type="EC" id="2.7.11.1" evidence="15 27"/>
<dbReference type="EC" id="3.1.26.-" evidence="15 34"/>
<dbReference type="EMBL" id="AF059198">
    <property type="protein sequence ID" value="AAC25991.1"/>
    <property type="molecule type" value="mRNA"/>
</dbReference>
<dbReference type="EMBL" id="AK292403">
    <property type="protein sequence ID" value="BAF85092.1"/>
    <property type="molecule type" value="mRNA"/>
</dbReference>
<dbReference type="EMBL" id="DA254477">
    <property type="status" value="NOT_ANNOTATED_CDS"/>
    <property type="molecule type" value="mRNA"/>
</dbReference>
<dbReference type="EMBL" id="AB209869">
    <property type="protein sequence ID" value="BAD93106.1"/>
    <property type="molecule type" value="mRNA"/>
</dbReference>
<dbReference type="EMBL" id="AC005803">
    <property type="status" value="NOT_ANNOTATED_CDS"/>
    <property type="molecule type" value="Genomic_DNA"/>
</dbReference>
<dbReference type="EMBL" id="AC025362">
    <property type="status" value="NOT_ANNOTATED_CDS"/>
    <property type="molecule type" value="Genomic_DNA"/>
</dbReference>
<dbReference type="EMBL" id="CH471109">
    <property type="protein sequence ID" value="EAW94214.1"/>
    <property type="molecule type" value="Genomic_DNA"/>
</dbReference>
<dbReference type="EMBL" id="BC130405">
    <property type="protein sequence ID" value="AAI30406.1"/>
    <property type="molecule type" value="mRNA"/>
</dbReference>
<dbReference type="EMBL" id="BC130407">
    <property type="protein sequence ID" value="AAI30408.1"/>
    <property type="molecule type" value="mRNA"/>
</dbReference>
<dbReference type="EMBL" id="BI912495">
    <property type="status" value="NOT_ANNOTATED_CDS"/>
    <property type="molecule type" value="mRNA"/>
</dbReference>
<dbReference type="CCDS" id="CCDS45762.1">
    <molecule id="O75460-1"/>
</dbReference>
<dbReference type="RefSeq" id="NP_001424.3">
    <molecule id="O75460-1"/>
    <property type="nucleotide sequence ID" value="NM_001433.5"/>
</dbReference>
<dbReference type="PDB" id="2HZ6">
    <property type="method" value="X-ray"/>
    <property type="resolution" value="3.10 A"/>
    <property type="chains" value="A=24-390"/>
</dbReference>
<dbReference type="PDB" id="3P23">
    <property type="method" value="X-ray"/>
    <property type="resolution" value="2.70 A"/>
    <property type="chains" value="A/B/C/D=547-977"/>
</dbReference>
<dbReference type="PDB" id="4U6R">
    <property type="method" value="X-ray"/>
    <property type="resolution" value="2.50 A"/>
    <property type="chains" value="A=547-977"/>
</dbReference>
<dbReference type="PDB" id="4YZ9">
    <property type="method" value="X-ray"/>
    <property type="resolution" value="2.46 A"/>
    <property type="chains" value="A/B/C=562-966"/>
</dbReference>
<dbReference type="PDB" id="4YZC">
    <property type="method" value="X-ray"/>
    <property type="resolution" value="2.49 A"/>
    <property type="chains" value="A/B=562-966"/>
</dbReference>
<dbReference type="PDB" id="4YZD">
    <property type="method" value="X-ray"/>
    <property type="resolution" value="3.10 A"/>
    <property type="chains" value="A/B/C=562-966"/>
</dbReference>
<dbReference type="PDB" id="4Z7G">
    <property type="method" value="X-ray"/>
    <property type="resolution" value="2.60 A"/>
    <property type="chains" value="A/B=562-977"/>
</dbReference>
<dbReference type="PDB" id="4Z7H">
    <property type="method" value="X-ray"/>
    <property type="resolution" value="2.90 A"/>
    <property type="chains" value="A/B=562-977"/>
</dbReference>
<dbReference type="PDB" id="5HGI">
    <property type="method" value="X-ray"/>
    <property type="resolution" value="2.58 A"/>
    <property type="chains" value="A=547-977"/>
</dbReference>
<dbReference type="PDB" id="6HV0">
    <property type="method" value="X-ray"/>
    <property type="resolution" value="2.73 A"/>
    <property type="chains" value="A=562-977"/>
</dbReference>
<dbReference type="PDB" id="6HX1">
    <property type="method" value="X-ray"/>
    <property type="resolution" value="2.14 A"/>
    <property type="chains" value="A=562-964"/>
</dbReference>
<dbReference type="PDB" id="6SHC">
    <property type="method" value="X-ray"/>
    <property type="resolution" value="3.55 A"/>
    <property type="chains" value="A=24-390"/>
</dbReference>
<dbReference type="PDB" id="6URC">
    <property type="method" value="X-ray"/>
    <property type="resolution" value="2.20 A"/>
    <property type="chains" value="A/B=547-977"/>
</dbReference>
<dbReference type="PDB" id="6W39">
    <property type="method" value="X-ray"/>
    <property type="resolution" value="1.74 A"/>
    <property type="chains" value="A/B=547-977"/>
</dbReference>
<dbReference type="PDB" id="6W3A">
    <property type="method" value="X-ray"/>
    <property type="resolution" value="2.61 A"/>
    <property type="chains" value="A/B=547-977"/>
</dbReference>
<dbReference type="PDB" id="6W3B">
    <property type="method" value="X-ray"/>
    <property type="resolution" value="2.57 A"/>
    <property type="chains" value="A=547-977"/>
</dbReference>
<dbReference type="PDB" id="6W3C">
    <property type="method" value="X-ray"/>
    <property type="resolution" value="2.30 A"/>
    <property type="chains" value="A/B/C/D=547-977"/>
</dbReference>
<dbReference type="PDB" id="6W3E">
    <property type="method" value="X-ray"/>
    <property type="resolution" value="2.74 A"/>
    <property type="chains" value="A/B=547-977"/>
</dbReference>
<dbReference type="PDB" id="6W3K">
    <property type="method" value="X-ray"/>
    <property type="resolution" value="2.08 A"/>
    <property type="chains" value="A=547-977"/>
</dbReference>
<dbReference type="PDB" id="6XDB">
    <property type="method" value="X-ray"/>
    <property type="resolution" value="2.45 A"/>
    <property type="chains" value="A=547-977"/>
</dbReference>
<dbReference type="PDB" id="6XDD">
    <property type="method" value="X-ray"/>
    <property type="resolution" value="2.40 A"/>
    <property type="chains" value="A/B=547-977"/>
</dbReference>
<dbReference type="PDB" id="6XDF">
    <property type="method" value="X-ray"/>
    <property type="resolution" value="2.54 A"/>
    <property type="chains" value="A/B=547-977"/>
</dbReference>
<dbReference type="PDB" id="7BMK">
    <property type="method" value="X-ray"/>
    <property type="resolution" value="1.85 A"/>
    <property type="chains" value="A/B=547-977"/>
</dbReference>
<dbReference type="PDB" id="8UVL">
    <property type="method" value="X-ray"/>
    <property type="resolution" value="2.43 A"/>
    <property type="chains" value="A=547-977"/>
</dbReference>
<dbReference type="PDBsum" id="2HZ6"/>
<dbReference type="PDBsum" id="3P23"/>
<dbReference type="PDBsum" id="4U6R"/>
<dbReference type="PDBsum" id="4YZ9"/>
<dbReference type="PDBsum" id="4YZC"/>
<dbReference type="PDBsum" id="4YZD"/>
<dbReference type="PDBsum" id="4Z7G"/>
<dbReference type="PDBsum" id="4Z7H"/>
<dbReference type="PDBsum" id="5HGI"/>
<dbReference type="PDBsum" id="6HV0"/>
<dbReference type="PDBsum" id="6HX1"/>
<dbReference type="PDBsum" id="6SHC"/>
<dbReference type="PDBsum" id="6URC"/>
<dbReference type="PDBsum" id="6W39"/>
<dbReference type="PDBsum" id="6W3A"/>
<dbReference type="PDBsum" id="6W3B"/>
<dbReference type="PDBsum" id="6W3C"/>
<dbReference type="PDBsum" id="6W3E"/>
<dbReference type="PDBsum" id="6W3K"/>
<dbReference type="PDBsum" id="6XDB"/>
<dbReference type="PDBsum" id="6XDD"/>
<dbReference type="PDBsum" id="6XDF"/>
<dbReference type="PDBsum" id="7BMK"/>
<dbReference type="PDBsum" id="8UVL"/>
<dbReference type="SMR" id="O75460"/>
<dbReference type="BioGRID" id="108391">
    <property type="interactions" value="67"/>
</dbReference>
<dbReference type="CORUM" id="O75460"/>
<dbReference type="DIP" id="DIP-31711N"/>
<dbReference type="FunCoup" id="O75460">
    <property type="interactions" value="1464"/>
</dbReference>
<dbReference type="IntAct" id="O75460">
    <property type="interactions" value="70"/>
</dbReference>
<dbReference type="MINT" id="O75460"/>
<dbReference type="STRING" id="9606.ENSP00000401445"/>
<dbReference type="BindingDB" id="O75460"/>
<dbReference type="ChEMBL" id="CHEMBL1163101"/>
<dbReference type="DrugBank" id="DB12010">
    <property type="generic name" value="Fostamatinib"/>
</dbReference>
<dbReference type="DrugBank" id="DB07382">
    <property type="generic name" value="N~2~-1H-benzimidazol-5-yl-N~4~-(3-cyclopropyl-1H-pyrazol-5-yl)pyrimidine-2,4-diamine"/>
</dbReference>
<dbReference type="DrugCentral" id="O75460"/>
<dbReference type="GuidetoPHARMACOLOGY" id="2020"/>
<dbReference type="TCDB" id="8.A.104.1.9">
    <property type="family name" value="the 5'-amp-activated protein kinase (ampk) family"/>
</dbReference>
<dbReference type="GlyCosmos" id="O75460">
    <property type="glycosylation" value="1 site, No reported glycans"/>
</dbReference>
<dbReference type="GlyGen" id="O75460">
    <property type="glycosylation" value="3 sites, 1 N-linked glycan (1 site), 1 O-linked glycan (1 site)"/>
</dbReference>
<dbReference type="iPTMnet" id="O75460"/>
<dbReference type="PhosphoSitePlus" id="O75460"/>
<dbReference type="BioMuta" id="ERN1"/>
<dbReference type="CPTAC" id="CPTAC-3100"/>
<dbReference type="CPTAC" id="CPTAC-3101"/>
<dbReference type="jPOST" id="O75460"/>
<dbReference type="MassIVE" id="O75460"/>
<dbReference type="PaxDb" id="9606-ENSP00000401445"/>
<dbReference type="PeptideAtlas" id="O75460"/>
<dbReference type="ProteomicsDB" id="50021">
    <molecule id="O75460-1"/>
</dbReference>
<dbReference type="Pumba" id="O75460"/>
<dbReference type="Antibodypedia" id="4011">
    <property type="antibodies" value="733 antibodies from 43 providers"/>
</dbReference>
<dbReference type="DNASU" id="2081"/>
<dbReference type="Ensembl" id="ENST00000433197.4">
    <molecule id="O75460-1"/>
    <property type="protein sequence ID" value="ENSP00000401445.2"/>
    <property type="gene ID" value="ENSG00000178607.17"/>
</dbReference>
<dbReference type="Ensembl" id="ENST00000606895.2">
    <molecule id="O75460-2"/>
    <property type="protein sequence ID" value="ENSP00000475519.1"/>
    <property type="gene ID" value="ENSG00000178607.17"/>
</dbReference>
<dbReference type="GeneID" id="2081"/>
<dbReference type="KEGG" id="hsa:2081"/>
<dbReference type="MANE-Select" id="ENST00000433197.4">
    <property type="protein sequence ID" value="ENSP00000401445.2"/>
    <property type="RefSeq nucleotide sequence ID" value="NM_001433.5"/>
    <property type="RefSeq protein sequence ID" value="NP_001424.3"/>
</dbReference>
<dbReference type="UCSC" id="uc002jdz.3">
    <molecule id="O75460-1"/>
    <property type="organism name" value="human"/>
</dbReference>
<dbReference type="AGR" id="HGNC:3449"/>
<dbReference type="CTD" id="2081"/>
<dbReference type="DisGeNET" id="2081"/>
<dbReference type="GeneCards" id="ERN1"/>
<dbReference type="HGNC" id="HGNC:3449">
    <property type="gene designation" value="ERN1"/>
</dbReference>
<dbReference type="HPA" id="ENSG00000178607">
    <property type="expression patterns" value="Tissue enhanced (adrenal gland, pancreas)"/>
</dbReference>
<dbReference type="MIM" id="604033">
    <property type="type" value="gene"/>
</dbReference>
<dbReference type="neXtProt" id="NX_O75460"/>
<dbReference type="OpenTargets" id="ENSG00000178607"/>
<dbReference type="PharmGKB" id="PA27861"/>
<dbReference type="VEuPathDB" id="HostDB:ENSG00000178607"/>
<dbReference type="eggNOG" id="KOG1027">
    <property type="taxonomic scope" value="Eukaryota"/>
</dbReference>
<dbReference type="GeneTree" id="ENSGT00940000159761"/>
<dbReference type="HOGENOM" id="CLU_004875_1_1_1"/>
<dbReference type="InParanoid" id="O75460"/>
<dbReference type="OMA" id="NYWVERF"/>
<dbReference type="OrthoDB" id="63989at2759"/>
<dbReference type="PAN-GO" id="O75460">
    <property type="GO annotations" value="6 GO annotations based on evolutionary models"/>
</dbReference>
<dbReference type="PhylomeDB" id="O75460"/>
<dbReference type="TreeFam" id="TF313986"/>
<dbReference type="PathwayCommons" id="O75460"/>
<dbReference type="Reactome" id="R-HSA-381070">
    <property type="pathway name" value="IRE1alpha activates chaperones"/>
</dbReference>
<dbReference type="SignaLink" id="O75460"/>
<dbReference type="SIGNOR" id="O75460"/>
<dbReference type="BioGRID-ORCS" id="2081">
    <property type="hits" value="13 hits in 1188 CRISPR screens"/>
</dbReference>
<dbReference type="ChiTaRS" id="ERN1">
    <property type="organism name" value="human"/>
</dbReference>
<dbReference type="EvolutionaryTrace" id="O75460"/>
<dbReference type="GeneWiki" id="ERN1"/>
<dbReference type="GenomeRNAi" id="2081"/>
<dbReference type="Pharos" id="O75460">
    <property type="development level" value="Tchem"/>
</dbReference>
<dbReference type="PRO" id="PR:O75460"/>
<dbReference type="Proteomes" id="UP000005640">
    <property type="component" value="Chromosome 17"/>
</dbReference>
<dbReference type="RNAct" id="O75460">
    <property type="molecule type" value="protein"/>
</dbReference>
<dbReference type="Bgee" id="ENSG00000178607">
    <property type="expression patterns" value="Expressed in parotid gland and 159 other cell types or tissues"/>
</dbReference>
<dbReference type="GO" id="GO:1990597">
    <property type="term" value="C:AIP1-IRE1 complex"/>
    <property type="evidence" value="ECO:0007669"/>
    <property type="project" value="Ensembl"/>
</dbReference>
<dbReference type="GO" id="GO:0005737">
    <property type="term" value="C:cytoplasm"/>
    <property type="evidence" value="ECO:0000314"/>
    <property type="project" value="UniProtKB"/>
</dbReference>
<dbReference type="GO" id="GO:0005783">
    <property type="term" value="C:endoplasmic reticulum"/>
    <property type="evidence" value="ECO:0000314"/>
    <property type="project" value="UniProtKB"/>
</dbReference>
<dbReference type="GO" id="GO:0005789">
    <property type="term" value="C:endoplasmic reticulum membrane"/>
    <property type="evidence" value="ECO:0000314"/>
    <property type="project" value="UniProtKB"/>
</dbReference>
<dbReference type="GO" id="GO:1990332">
    <property type="term" value="C:Ire1 complex"/>
    <property type="evidence" value="ECO:0000303"/>
    <property type="project" value="ParkinsonsUK-UCL"/>
</dbReference>
<dbReference type="GO" id="GO:1990630">
    <property type="term" value="C:IRE1-RACK1-PP2A complex"/>
    <property type="evidence" value="ECO:0000314"/>
    <property type="project" value="ParkinsonsUK-UCL"/>
</dbReference>
<dbReference type="GO" id="GO:1990604">
    <property type="term" value="C:IRE1-TRAF2-ASK1 complex"/>
    <property type="evidence" value="ECO:0000314"/>
    <property type="project" value="ParkinsonsUK-UCL"/>
</dbReference>
<dbReference type="GO" id="GO:0005739">
    <property type="term" value="C:mitochondrion"/>
    <property type="evidence" value="ECO:0007669"/>
    <property type="project" value="Ensembl"/>
</dbReference>
<dbReference type="GO" id="GO:0005637">
    <property type="term" value="C:nuclear inner membrane"/>
    <property type="evidence" value="ECO:0007669"/>
    <property type="project" value="Ensembl"/>
</dbReference>
<dbReference type="GO" id="GO:0043531">
    <property type="term" value="F:ADP binding"/>
    <property type="evidence" value="ECO:0000314"/>
    <property type="project" value="ParkinsonsUK-UCL"/>
</dbReference>
<dbReference type="GO" id="GO:0005524">
    <property type="term" value="F:ATP binding"/>
    <property type="evidence" value="ECO:0000314"/>
    <property type="project" value="UniProtKB"/>
</dbReference>
<dbReference type="GO" id="GO:0019899">
    <property type="term" value="F:enzyme binding"/>
    <property type="evidence" value="ECO:0000353"/>
    <property type="project" value="UniProtKB"/>
</dbReference>
<dbReference type="GO" id="GO:0030544">
    <property type="term" value="F:Hsp70 protein binding"/>
    <property type="evidence" value="ECO:0000353"/>
    <property type="project" value="ParkinsonsUK-UCL"/>
</dbReference>
<dbReference type="GO" id="GO:0051879">
    <property type="term" value="F:Hsp90 protein binding"/>
    <property type="evidence" value="ECO:0000314"/>
    <property type="project" value="ParkinsonsUK-UCL"/>
</dbReference>
<dbReference type="GO" id="GO:0042802">
    <property type="term" value="F:identical protein binding"/>
    <property type="evidence" value="ECO:0000353"/>
    <property type="project" value="IntAct"/>
</dbReference>
<dbReference type="GO" id="GO:0000287">
    <property type="term" value="F:magnesium ion binding"/>
    <property type="evidence" value="ECO:0000314"/>
    <property type="project" value="UniProtKB"/>
</dbReference>
<dbReference type="GO" id="GO:0005161">
    <property type="term" value="F:platelet-derived growth factor receptor binding"/>
    <property type="evidence" value="ECO:0000353"/>
    <property type="project" value="BHF-UCL"/>
</dbReference>
<dbReference type="GO" id="GO:0042803">
    <property type="term" value="F:protein homodimerization activity"/>
    <property type="evidence" value="ECO:0000314"/>
    <property type="project" value="UniProtKB"/>
</dbReference>
<dbReference type="GO" id="GO:0106310">
    <property type="term" value="F:protein serine kinase activity"/>
    <property type="evidence" value="ECO:0007669"/>
    <property type="project" value="RHEA"/>
</dbReference>
<dbReference type="GO" id="GO:0004674">
    <property type="term" value="F:protein serine/threonine kinase activity"/>
    <property type="evidence" value="ECO:0000314"/>
    <property type="project" value="UniProtKB"/>
</dbReference>
<dbReference type="GO" id="GO:0004521">
    <property type="term" value="F:RNA endonuclease activity"/>
    <property type="evidence" value="ECO:0000314"/>
    <property type="project" value="UniProtKB"/>
</dbReference>
<dbReference type="GO" id="GO:0051082">
    <property type="term" value="F:unfolded protein binding"/>
    <property type="evidence" value="ECO:0000318"/>
    <property type="project" value="GO_Central"/>
</dbReference>
<dbReference type="GO" id="GO:0071333">
    <property type="term" value="P:cellular response to glucose stimulus"/>
    <property type="evidence" value="ECO:0000314"/>
    <property type="project" value="ParkinsonsUK-UCL"/>
</dbReference>
<dbReference type="GO" id="GO:0070301">
    <property type="term" value="P:cellular response to hydrogen peroxide"/>
    <property type="evidence" value="ECO:0007669"/>
    <property type="project" value="Ensembl"/>
</dbReference>
<dbReference type="GO" id="GO:0034620">
    <property type="term" value="P:cellular response to unfolded protein"/>
    <property type="evidence" value="ECO:0000314"/>
    <property type="project" value="ParkinsonsUK-UCL"/>
</dbReference>
<dbReference type="GO" id="GO:0035924">
    <property type="term" value="P:cellular response to vascular endothelial growth factor stimulus"/>
    <property type="evidence" value="ECO:0000314"/>
    <property type="project" value="UniProtKB"/>
</dbReference>
<dbReference type="GO" id="GO:0001935">
    <property type="term" value="P:endothelial cell proliferation"/>
    <property type="evidence" value="ECO:0000314"/>
    <property type="project" value="UniProtKB"/>
</dbReference>
<dbReference type="GO" id="GO:1901142">
    <property type="term" value="P:insulin metabolic process"/>
    <property type="evidence" value="ECO:0000314"/>
    <property type="project" value="ParkinsonsUK-UCL"/>
</dbReference>
<dbReference type="GO" id="GO:0070059">
    <property type="term" value="P:intrinsic apoptotic signaling pathway in response to endoplasmic reticulum stress"/>
    <property type="evidence" value="ECO:0000250"/>
    <property type="project" value="UniProtKB"/>
</dbReference>
<dbReference type="GO" id="GO:0036498">
    <property type="term" value="P:IRE1-mediated unfolded protein response"/>
    <property type="evidence" value="ECO:0000314"/>
    <property type="project" value="UniProtKB"/>
</dbReference>
<dbReference type="GO" id="GO:0006402">
    <property type="term" value="P:mRNA catabolic process"/>
    <property type="evidence" value="ECO:0000304"/>
    <property type="project" value="ParkinsonsUK-UCL"/>
</dbReference>
<dbReference type="GO" id="GO:0070054">
    <property type="term" value="P:mRNA splicing, via endonucleolytic cleavage and ligation"/>
    <property type="evidence" value="ECO:0000314"/>
    <property type="project" value="UniProtKB"/>
</dbReference>
<dbReference type="GO" id="GO:1990579">
    <property type="term" value="P:peptidyl-serine trans-autophosphorylation"/>
    <property type="evidence" value="ECO:0000315"/>
    <property type="project" value="ParkinsonsUK-UCL"/>
</dbReference>
<dbReference type="GO" id="GO:1900103">
    <property type="term" value="P:positive regulation of endoplasmic reticulum unfolded protein response"/>
    <property type="evidence" value="ECO:0000315"/>
    <property type="project" value="UniProtKB"/>
</dbReference>
<dbReference type="GO" id="GO:0043507">
    <property type="term" value="P:positive regulation of JUN kinase activity"/>
    <property type="evidence" value="ECO:0000314"/>
    <property type="project" value="ParkinsonsUK-UCL"/>
</dbReference>
<dbReference type="GO" id="GO:0033120">
    <property type="term" value="P:positive regulation of RNA splicing"/>
    <property type="evidence" value="ECO:0000314"/>
    <property type="project" value="UniProtKB"/>
</dbReference>
<dbReference type="GO" id="GO:1904707">
    <property type="term" value="P:positive regulation of vascular associated smooth muscle cell proliferation"/>
    <property type="evidence" value="ECO:0000315"/>
    <property type="project" value="BHF-UCL"/>
</dbReference>
<dbReference type="GO" id="GO:0006468">
    <property type="term" value="P:protein phosphorylation"/>
    <property type="evidence" value="ECO:0000314"/>
    <property type="project" value="UniProtKB"/>
</dbReference>
<dbReference type="GO" id="GO:0016241">
    <property type="term" value="P:regulation of macroautophagy"/>
    <property type="evidence" value="ECO:0000304"/>
    <property type="project" value="ParkinsonsUK-UCL"/>
</dbReference>
<dbReference type="GO" id="GO:0034976">
    <property type="term" value="P:response to endoplasmic reticulum stress"/>
    <property type="evidence" value="ECO:0000314"/>
    <property type="project" value="ParkinsonsUK-UCL"/>
</dbReference>
<dbReference type="CDD" id="cd09769">
    <property type="entry name" value="Luminal_IRE1"/>
    <property type="match status" value="1"/>
</dbReference>
<dbReference type="CDD" id="cd10422">
    <property type="entry name" value="RNase_Ire1"/>
    <property type="match status" value="1"/>
</dbReference>
<dbReference type="CDD" id="cd13982">
    <property type="entry name" value="STKc_IRE1"/>
    <property type="match status" value="1"/>
</dbReference>
<dbReference type="FunFam" id="2.130.10.10:FF:000225">
    <property type="entry name" value="Endoplasmic reticulum to nucleus-signaling 1"/>
    <property type="match status" value="1"/>
</dbReference>
<dbReference type="FunFam" id="3.30.200.20:FF:000077">
    <property type="entry name" value="Putative Serine/threonine-protein kinase/endoribonuclease IRE1"/>
    <property type="match status" value="1"/>
</dbReference>
<dbReference type="FunFam" id="1.20.1440.180:FF:000001">
    <property type="entry name" value="Serine/threonine-protein kinase/endoribonuclease IRE1"/>
    <property type="match status" value="1"/>
</dbReference>
<dbReference type="FunFam" id="1.10.510.10:FF:000215">
    <property type="entry name" value="serine/threonine-protein kinase/endoribonuclease IRE1 isoform X1"/>
    <property type="match status" value="1"/>
</dbReference>
<dbReference type="Gene3D" id="1.20.1440.180">
    <property type="entry name" value="KEN domain"/>
    <property type="match status" value="1"/>
</dbReference>
<dbReference type="Gene3D" id="3.30.200.20">
    <property type="entry name" value="Phosphorylase Kinase, domain 1"/>
    <property type="match status" value="1"/>
</dbReference>
<dbReference type="Gene3D" id="1.10.510.10">
    <property type="entry name" value="Transferase(Phosphotransferase) domain 1"/>
    <property type="match status" value="1"/>
</dbReference>
<dbReference type="Gene3D" id="2.130.10.10">
    <property type="entry name" value="YVTN repeat-like/Quinoprotein amine dehydrogenase"/>
    <property type="match status" value="1"/>
</dbReference>
<dbReference type="InterPro" id="IPR045133">
    <property type="entry name" value="IRE1/2-like"/>
</dbReference>
<dbReference type="InterPro" id="IPR010513">
    <property type="entry name" value="KEN_dom"/>
</dbReference>
<dbReference type="InterPro" id="IPR038357">
    <property type="entry name" value="KEN_sf"/>
</dbReference>
<dbReference type="InterPro" id="IPR011009">
    <property type="entry name" value="Kinase-like_dom_sf"/>
</dbReference>
<dbReference type="InterPro" id="IPR018391">
    <property type="entry name" value="PQQ_b-propeller_rpt"/>
</dbReference>
<dbReference type="InterPro" id="IPR000719">
    <property type="entry name" value="Prot_kinase_dom"/>
</dbReference>
<dbReference type="InterPro" id="IPR011047">
    <property type="entry name" value="Quinoprotein_ADH-like_sf"/>
</dbReference>
<dbReference type="InterPro" id="IPR008271">
    <property type="entry name" value="Ser/Thr_kinase_AS"/>
</dbReference>
<dbReference type="InterPro" id="IPR015943">
    <property type="entry name" value="WD40/YVTN_repeat-like_dom_sf"/>
</dbReference>
<dbReference type="PANTHER" id="PTHR13954">
    <property type="entry name" value="IRE1-RELATED"/>
    <property type="match status" value="1"/>
</dbReference>
<dbReference type="PANTHER" id="PTHR13954:SF17">
    <property type="entry name" value="SERINE_THREONINE-PROTEIN KINASE_ENDORIBONUCLEASE IRE1"/>
    <property type="match status" value="1"/>
</dbReference>
<dbReference type="Pfam" id="PF00069">
    <property type="entry name" value="Pkinase"/>
    <property type="match status" value="1"/>
</dbReference>
<dbReference type="Pfam" id="PF06479">
    <property type="entry name" value="Ribonuc_2-5A"/>
    <property type="match status" value="1"/>
</dbReference>
<dbReference type="SMART" id="SM00564">
    <property type="entry name" value="PQQ"/>
    <property type="match status" value="5"/>
</dbReference>
<dbReference type="SMART" id="SM00580">
    <property type="entry name" value="PUG"/>
    <property type="match status" value="1"/>
</dbReference>
<dbReference type="SMART" id="SM00220">
    <property type="entry name" value="S_TKc"/>
    <property type="match status" value="1"/>
</dbReference>
<dbReference type="SUPFAM" id="SSF56112">
    <property type="entry name" value="Protein kinase-like (PK-like)"/>
    <property type="match status" value="1"/>
</dbReference>
<dbReference type="SUPFAM" id="SSF50998">
    <property type="entry name" value="Quinoprotein alcohol dehydrogenase-like"/>
    <property type="match status" value="1"/>
</dbReference>
<dbReference type="PROSITE" id="PS51392">
    <property type="entry name" value="KEN"/>
    <property type="match status" value="1"/>
</dbReference>
<dbReference type="PROSITE" id="PS50011">
    <property type="entry name" value="PROTEIN_KINASE_DOM"/>
    <property type="match status" value="1"/>
</dbReference>
<dbReference type="PROSITE" id="PS00108">
    <property type="entry name" value="PROTEIN_KINASE_ST"/>
    <property type="match status" value="1"/>
</dbReference>
<evidence type="ECO:0000250" key="1">
    <source>
        <dbReference type="UniProtKB" id="P32361"/>
    </source>
</evidence>
<evidence type="ECO:0000250" key="2">
    <source>
        <dbReference type="UniProtKB" id="Q9EQY0"/>
    </source>
</evidence>
<evidence type="ECO:0000255" key="3"/>
<evidence type="ECO:0000255" key="4">
    <source>
        <dbReference type="PROSITE-ProRule" id="PRU00159"/>
    </source>
</evidence>
<evidence type="ECO:0000255" key="5">
    <source>
        <dbReference type="PROSITE-ProRule" id="PRU00725"/>
    </source>
</evidence>
<evidence type="ECO:0000255" key="6">
    <source>
        <dbReference type="PROSITE-ProRule" id="PRU10027"/>
    </source>
</evidence>
<evidence type="ECO:0000256" key="7">
    <source>
        <dbReference type="SAM" id="MobiDB-lite"/>
    </source>
</evidence>
<evidence type="ECO:0000269" key="8">
    <source>
    </source>
</evidence>
<evidence type="ECO:0000269" key="9">
    <source>
    </source>
</evidence>
<evidence type="ECO:0000269" key="10">
    <source>
    </source>
</evidence>
<evidence type="ECO:0000269" key="11">
    <source>
    </source>
</evidence>
<evidence type="ECO:0000269" key="12">
    <source>
    </source>
</evidence>
<evidence type="ECO:0000269" key="13">
    <source>
    </source>
</evidence>
<evidence type="ECO:0000269" key="14">
    <source>
    </source>
</evidence>
<evidence type="ECO:0000269" key="15">
    <source>
    </source>
</evidence>
<evidence type="ECO:0000269" key="16">
    <source>
    </source>
</evidence>
<evidence type="ECO:0000269" key="17">
    <source>
    </source>
</evidence>
<evidence type="ECO:0000269" key="18">
    <source>
    </source>
</evidence>
<evidence type="ECO:0000269" key="19">
    <source>
    </source>
</evidence>
<evidence type="ECO:0000269" key="20">
    <source>
    </source>
</evidence>
<evidence type="ECO:0000269" key="21">
    <source>
    </source>
</evidence>
<evidence type="ECO:0000269" key="22">
    <source>
    </source>
</evidence>
<evidence type="ECO:0000269" key="23">
    <source>
    </source>
</evidence>
<evidence type="ECO:0000269" key="24">
    <source>
    </source>
</evidence>
<evidence type="ECO:0000269" key="25">
    <source>
    </source>
</evidence>
<evidence type="ECO:0000269" key="26">
    <source>
    </source>
</evidence>
<evidence type="ECO:0000269" key="27">
    <source>
    </source>
</evidence>
<evidence type="ECO:0000303" key="28">
    <source>
    </source>
</evidence>
<evidence type="ECO:0000303" key="29">
    <source>
    </source>
</evidence>
<evidence type="ECO:0000303" key="30">
    <source>
    </source>
</evidence>
<evidence type="ECO:0000303" key="31">
    <source>
    </source>
</evidence>
<evidence type="ECO:0000305" key="32"/>
<evidence type="ECO:0000305" key="33">
    <source>
    </source>
</evidence>
<evidence type="ECO:0000305" key="34">
    <source>
    </source>
</evidence>
<evidence type="ECO:0000312" key="35">
    <source>
        <dbReference type="EMBL" id="AAC25991.1"/>
    </source>
</evidence>
<evidence type="ECO:0000312" key="36">
    <source>
        <dbReference type="HGNC" id="HGNC:3449"/>
    </source>
</evidence>
<evidence type="ECO:0007744" key="37">
    <source>
        <dbReference type="PDB" id="2HZ6"/>
    </source>
</evidence>
<evidence type="ECO:0007744" key="38">
    <source>
        <dbReference type="PDB" id="3P23"/>
    </source>
</evidence>
<evidence type="ECO:0007744" key="39">
    <source>
    </source>
</evidence>
<evidence type="ECO:0007829" key="40">
    <source>
        <dbReference type="PDB" id="2HZ6"/>
    </source>
</evidence>
<evidence type="ECO:0007829" key="41">
    <source>
        <dbReference type="PDB" id="3P23"/>
    </source>
</evidence>
<evidence type="ECO:0007829" key="42">
    <source>
        <dbReference type="PDB" id="4YZ9"/>
    </source>
</evidence>
<evidence type="ECO:0007829" key="43">
    <source>
        <dbReference type="PDB" id="4YZC"/>
    </source>
</evidence>
<evidence type="ECO:0007829" key="44">
    <source>
        <dbReference type="PDB" id="6HV0"/>
    </source>
</evidence>
<evidence type="ECO:0007829" key="45">
    <source>
        <dbReference type="PDB" id="6HX1"/>
    </source>
</evidence>
<evidence type="ECO:0007829" key="46">
    <source>
        <dbReference type="PDB" id="6W39"/>
    </source>
</evidence>
<evidence type="ECO:0007829" key="47">
    <source>
        <dbReference type="PDB" id="6W3E"/>
    </source>
</evidence>
<evidence type="ECO:0007829" key="48">
    <source>
        <dbReference type="PDB" id="6W3K"/>
    </source>
</evidence>
<evidence type="ECO:0007829" key="49">
    <source>
        <dbReference type="PDB" id="6XDF"/>
    </source>
</evidence>
<feature type="signal peptide" evidence="3">
    <location>
        <begin position="1"/>
        <end position="18"/>
    </location>
</feature>
<feature type="chain" id="PRO_0000024327" description="Serine/threonine-protein kinase/endoribonuclease IRE1">
    <location>
        <begin position="19"/>
        <end position="977"/>
    </location>
</feature>
<feature type="topological domain" description="Lumenal" evidence="3">
    <location>
        <begin position="19"/>
        <end position="443"/>
    </location>
</feature>
<feature type="transmembrane region" description="Helical" evidence="3">
    <location>
        <begin position="444"/>
        <end position="464"/>
    </location>
</feature>
<feature type="topological domain" description="Cytoplasmic" evidence="3">
    <location>
        <begin position="465"/>
        <end position="977"/>
    </location>
</feature>
<feature type="domain" description="Protein kinase" evidence="4">
    <location>
        <begin position="571"/>
        <end position="832"/>
    </location>
</feature>
<feature type="domain" description="KEN" evidence="5">
    <location>
        <begin position="835"/>
        <end position="963"/>
    </location>
</feature>
<feature type="region of interest" description="Disordered" evidence="7">
    <location>
        <begin position="410"/>
        <end position="434"/>
    </location>
</feature>
<feature type="region of interest" description="Disordered" evidence="7">
    <location>
        <begin position="491"/>
        <end position="559"/>
    </location>
</feature>
<feature type="region of interest" description="Interacts with hydroxy-aryl-aldehyde inhibitors" evidence="2">
    <location>
        <begin position="906"/>
        <end position="907"/>
    </location>
</feature>
<feature type="compositionally biased region" description="Polar residues" evidence="7">
    <location>
        <begin position="410"/>
        <end position="419"/>
    </location>
</feature>
<feature type="compositionally biased region" description="Low complexity" evidence="7">
    <location>
        <begin position="513"/>
        <end position="552"/>
    </location>
</feature>
<feature type="active site" description="Proton acceptor" evidence="1 4 6">
    <location>
        <position position="688"/>
    </location>
</feature>
<feature type="binding site" evidence="1 4">
    <location>
        <begin position="577"/>
        <end position="585"/>
    </location>
    <ligand>
        <name>ATP</name>
        <dbReference type="ChEBI" id="CHEBI:30616"/>
    </ligand>
</feature>
<feature type="binding site" evidence="4 15 27 38">
    <location>
        <position position="599"/>
    </location>
    <ligand>
        <name>ATP</name>
        <dbReference type="ChEBI" id="CHEBI:30616"/>
    </ligand>
</feature>
<feature type="binding site" evidence="15 38">
    <location>
        <begin position="643"/>
        <end position="645"/>
    </location>
    <ligand>
        <name>ATP</name>
        <dbReference type="ChEBI" id="CHEBI:30616"/>
    </ligand>
</feature>
<feature type="binding site" evidence="15 38">
    <location>
        <begin position="690"/>
        <end position="693"/>
    </location>
    <ligand>
        <name>ATP</name>
        <dbReference type="ChEBI" id="CHEBI:30616"/>
    </ligand>
</feature>
<feature type="binding site" evidence="15 38">
    <location>
        <position position="711"/>
    </location>
    <ligand>
        <name>ATP</name>
        <dbReference type="ChEBI" id="CHEBI:30616"/>
    </ligand>
</feature>
<feature type="site" description="Interacts with hydroxy-aryl-aldehyde inhibitors" evidence="2">
    <location>
        <position position="892"/>
    </location>
</feature>
<feature type="modified residue" description="Phosphoserine" evidence="23 26">
    <location>
        <position position="724"/>
    </location>
</feature>
<feature type="modified residue" description="Phosphoserine" evidence="23">
    <location>
        <position position="729"/>
    </location>
</feature>
<feature type="modified residue" description="Phosphothreonine" evidence="39">
    <location>
        <position position="973"/>
    </location>
</feature>
<feature type="glycosylation site" description="N-linked (GlcNAc...) asparagine" evidence="3">
    <location>
        <position position="176"/>
    </location>
</feature>
<feature type="splice variant" id="VSP_034582" description="In isoform 2." evidence="29 30">
    <original>IFGSTSTVTLPETLLFVSTLDGSLHAVSKRTGSIKWTLKEDPVLQVPTHVEE</original>
    <variation>VSDRGAWGGGQLATAGSGPGQRRGAGAGVRAGSATAAARCPVSPAVGGSGRA</variation>
    <location>
        <begin position="19"/>
        <end position="70"/>
    </location>
</feature>
<feature type="splice variant" id="VSP_034583" description="In isoform 2." evidence="29 30">
    <location>
        <begin position="71"/>
        <end position="977"/>
    </location>
</feature>
<feature type="sequence variant" id="VAR_040488" description="In a renal clear cell carcinoma sample; somatic mutation; dbSNP:rs1397145500." evidence="13">
    <original>N</original>
    <variation>S</variation>
    <location>
        <position position="244"/>
    </location>
</feature>
<feature type="sequence variant" id="VAR_040489" description="In dbSNP:rs55869215." evidence="13">
    <original>V</original>
    <variation>M</variation>
    <location>
        <position position="418"/>
    </location>
</feature>
<feature type="sequence variant" id="VAR_040490" description="In a lung adenocarcinoma sample; somatic mutation; dbSNP:rs186305118." evidence="13">
    <original>L</original>
    <variation>R</variation>
    <location>
        <position position="474"/>
    </location>
</feature>
<feature type="sequence variant" id="VAR_040491" description="In a gastric adenocarcinoma sample; somatic mutation; dbSNP:rs146710304." evidence="13">
    <original>R</original>
    <variation>W</variation>
    <location>
        <position position="635"/>
    </location>
</feature>
<feature type="sequence variant" id="VAR_040492" description="In dbSNP:rs918253870." evidence="13">
    <original>N</original>
    <variation>S</variation>
    <location>
        <position position="700"/>
    </location>
</feature>
<feature type="sequence variant" id="VAR_040493" description="In a glioblastoma multiforme sample; somatic mutation." evidence="13">
    <original>S</original>
    <variation>F</variation>
    <location>
        <position position="769"/>
    </location>
</feature>
<feature type="sequence variant" id="VAR_040494" description="In an ovarian serous carcinoma sample; somatic mutation; dbSNP:rs1279653488." evidence="13">
    <original>P</original>
    <variation>L</variation>
    <location>
        <position position="830"/>
    </location>
</feature>
<feature type="mutagenesis site" description="Impaired ability to homodimerize." evidence="12">
    <original>Q</original>
    <variation>E</variation>
    <location>
        <position position="105"/>
    </location>
</feature>
<feature type="mutagenesis site" description="No effect on dimerization. No effect on interaction with P4HB; when associated with S-148 and S-332." evidence="11 25">
    <original>C</original>
    <variation>S</variation>
    <location>
        <position position="109"/>
    </location>
</feature>
<feature type="mutagenesis site" description="Abolishes ability to homodimerize." evidence="12">
    <original>D</original>
    <variation>P</variation>
    <location>
        <position position="123"/>
    </location>
</feature>
<feature type="mutagenesis site" description="Abolishes ability to homodimerize." evidence="12">
    <original>W</original>
    <variation>A</variation>
    <location>
        <position position="125"/>
    </location>
</feature>
<feature type="mutagenesis site" description="No effect on dimerization. Weakens dimer; when associated with S-332. Abolishes interaction with PDIA6. Prolonged splicing of XBP1, probably due to prolonged activation of PDIA6. Inhibits formation of oxidized multimeric forms of ERN1 in response to ER stress. No effect on interaction with P4HB; when associated with S-109 and S-332." evidence="11 19 25">
    <original>C</original>
    <variation>S</variation>
    <location>
        <position position="148"/>
    </location>
</feature>
<feature type="mutagenesis site" description="No effect on dimerization. Weakens dimer; when associated with S-148. No effect on interaction with P4HB; when associated with S-109 and S-148." evidence="11 25">
    <original>C</original>
    <variation>S</variation>
    <location>
        <position position="332"/>
    </location>
</feature>
<feature type="mutagenesis site" description="Loss of autophosphorylation and of endoribonuclease activity. Inhibition of growth arrest." evidence="8 27">
    <original>K</original>
    <variation>A</variation>
    <location>
        <position position="599"/>
    </location>
</feature>
<feature type="sequence conflict" description="In Ref. 1; AAC25991." evidence="32" ref="1">
    <original>DV</original>
    <variation>EG</variation>
    <location>
        <begin position="190"/>
        <end position="191"/>
    </location>
</feature>
<feature type="sequence conflict" description="In Ref. 1; AAC25991." evidence="32" ref="1">
    <original>I</original>
    <variation>V</variation>
    <location>
        <position position="768"/>
    </location>
</feature>
<feature type="sequence conflict" description="In Ref. 2; BAF85092." evidence="32" ref="2">
    <original>D</original>
    <variation>G</variation>
    <location>
        <position position="816"/>
    </location>
</feature>
<feature type="sequence conflict" description="In Ref. 1; AAC25991." evidence="32" ref="1">
    <original>KH</original>
    <variation>ND</variation>
    <location>
        <begin position="824"/>
        <end position="825"/>
    </location>
</feature>
<feature type="sequence conflict" description="In Ref. 1; AAC25991." evidence="32" ref="1">
    <original>V</original>
    <variation>D</variation>
    <location>
        <position position="880"/>
    </location>
</feature>
<feature type="sequence conflict" description="In Ref. 2; BAF85092." evidence="32" ref="2">
    <original>M</original>
    <variation>T</variation>
    <location>
        <position position="904"/>
    </location>
</feature>
<feature type="sequence conflict" description="In Ref. 1; AAC25991." evidence="32" ref="1">
    <original>S</original>
    <variation>T</variation>
    <location>
        <position position="924"/>
    </location>
</feature>
<feature type="strand" evidence="40">
    <location>
        <begin position="32"/>
        <end position="37"/>
    </location>
</feature>
<feature type="strand" evidence="40">
    <location>
        <begin position="40"/>
        <end position="46"/>
    </location>
</feature>
<feature type="turn" evidence="40">
    <location>
        <begin position="47"/>
        <end position="49"/>
    </location>
</feature>
<feature type="strand" evidence="40">
    <location>
        <begin position="52"/>
        <end position="57"/>
    </location>
</feature>
<feature type="strand" evidence="40">
    <location>
        <begin position="73"/>
        <end position="75"/>
    </location>
</feature>
<feature type="turn" evidence="40">
    <location>
        <begin position="77"/>
        <end position="79"/>
    </location>
</feature>
<feature type="strand" evidence="40">
    <location>
        <begin position="82"/>
        <end position="84"/>
    </location>
</feature>
<feature type="strand" evidence="40">
    <location>
        <begin position="93"/>
        <end position="95"/>
    </location>
</feature>
<feature type="helix" evidence="40">
    <location>
        <begin position="100"/>
        <end position="104"/>
    </location>
</feature>
<feature type="strand" evidence="40">
    <location>
        <begin position="120"/>
        <end position="128"/>
    </location>
</feature>
<feature type="strand" evidence="40">
    <location>
        <begin position="154"/>
        <end position="164"/>
    </location>
</feature>
<feature type="strand" evidence="40">
    <location>
        <begin position="168"/>
        <end position="172"/>
    </location>
</feature>
<feature type="strand" evidence="40">
    <location>
        <begin position="176"/>
        <end position="182"/>
    </location>
</feature>
<feature type="strand" evidence="40">
    <location>
        <begin position="197"/>
        <end position="201"/>
    </location>
</feature>
<feature type="strand" evidence="40">
    <location>
        <begin position="205"/>
        <end position="209"/>
    </location>
</feature>
<feature type="turn" evidence="40">
    <location>
        <begin position="211"/>
        <end position="213"/>
    </location>
</feature>
<feature type="strand" evidence="40">
    <location>
        <begin position="216"/>
        <end position="221"/>
    </location>
</feature>
<feature type="strand" evidence="40">
    <location>
        <begin position="226"/>
        <end position="231"/>
    </location>
</feature>
<feature type="strand" evidence="40">
    <location>
        <begin position="238"/>
        <end position="240"/>
    </location>
</feature>
<feature type="strand" evidence="40">
    <location>
        <begin position="243"/>
        <end position="246"/>
    </location>
</feature>
<feature type="helix" evidence="40">
    <location>
        <begin position="247"/>
        <end position="264"/>
    </location>
</feature>
<feature type="helix" evidence="40">
    <location>
        <begin position="273"/>
        <end position="279"/>
    </location>
</feature>
<feature type="strand" evidence="40">
    <location>
        <begin position="280"/>
        <end position="284"/>
    </location>
</feature>
<feature type="strand" evidence="40">
    <location>
        <begin position="286"/>
        <end position="288"/>
    </location>
</feature>
<feature type="strand" evidence="40">
    <location>
        <begin position="297"/>
        <end position="300"/>
    </location>
</feature>
<feature type="turn" evidence="40">
    <location>
        <begin position="359"/>
        <end position="361"/>
    </location>
</feature>
<feature type="strand" evidence="46">
    <location>
        <begin position="564"/>
        <end position="566"/>
    </location>
</feature>
<feature type="strand" evidence="46">
    <location>
        <begin position="569"/>
        <end position="578"/>
    </location>
</feature>
<feature type="helix" evidence="45">
    <location>
        <begin position="581"/>
        <end position="583"/>
    </location>
</feature>
<feature type="strand" evidence="46">
    <location>
        <begin position="585"/>
        <end position="591"/>
    </location>
</feature>
<feature type="strand" evidence="46">
    <location>
        <begin position="594"/>
        <end position="601"/>
    </location>
</feature>
<feature type="helix" evidence="46">
    <location>
        <begin position="603"/>
        <end position="605"/>
    </location>
</feature>
<feature type="helix" evidence="46">
    <location>
        <begin position="606"/>
        <end position="619"/>
    </location>
</feature>
<feature type="strand" evidence="46">
    <location>
        <begin position="628"/>
        <end position="633"/>
    </location>
</feature>
<feature type="strand" evidence="46">
    <location>
        <begin position="638"/>
        <end position="643"/>
    </location>
</feature>
<feature type="strand" evidence="46">
    <location>
        <begin position="645"/>
        <end position="648"/>
    </location>
</feature>
<feature type="helix" evidence="46">
    <location>
        <begin position="649"/>
        <end position="654"/>
    </location>
</feature>
<feature type="strand" evidence="46">
    <location>
        <begin position="655"/>
        <end position="657"/>
    </location>
</feature>
<feature type="helix" evidence="46">
    <location>
        <begin position="658"/>
        <end position="661"/>
    </location>
</feature>
<feature type="helix" evidence="46">
    <location>
        <begin position="665"/>
        <end position="681"/>
    </location>
</feature>
<feature type="helix" evidence="46">
    <location>
        <begin position="691"/>
        <end position="693"/>
    </location>
</feature>
<feature type="strand" evidence="46">
    <location>
        <begin position="694"/>
        <end position="697"/>
    </location>
</feature>
<feature type="strand" evidence="47">
    <location>
        <begin position="701"/>
        <end position="703"/>
    </location>
</feature>
<feature type="strand" evidence="46">
    <location>
        <begin position="707"/>
        <end position="709"/>
    </location>
</feature>
<feature type="strand" evidence="45">
    <location>
        <begin position="711"/>
        <end position="716"/>
    </location>
</feature>
<feature type="strand" evidence="44">
    <location>
        <begin position="718"/>
        <end position="721"/>
    </location>
</feature>
<feature type="strand" evidence="45">
    <location>
        <begin position="723"/>
        <end position="727"/>
    </location>
</feature>
<feature type="strand" evidence="44">
    <location>
        <begin position="729"/>
        <end position="731"/>
    </location>
</feature>
<feature type="turn" evidence="44">
    <location>
        <begin position="732"/>
        <end position="736"/>
    </location>
</feature>
<feature type="helix" evidence="46">
    <location>
        <begin position="740"/>
        <end position="743"/>
    </location>
</feature>
<feature type="strand" evidence="49">
    <location>
        <begin position="744"/>
        <end position="746"/>
    </location>
</feature>
<feature type="helix" evidence="46">
    <location>
        <begin position="754"/>
        <end position="768"/>
    </location>
</feature>
<feature type="turn" evidence="46">
    <location>
        <begin position="778"/>
        <end position="780"/>
    </location>
</feature>
<feature type="helix" evidence="46">
    <location>
        <begin position="781"/>
        <end position="787"/>
    </location>
</feature>
<feature type="strand" evidence="43">
    <location>
        <begin position="793"/>
        <end position="795"/>
    </location>
</feature>
<feature type="helix" evidence="46">
    <location>
        <begin position="800"/>
        <end position="812"/>
    </location>
</feature>
<feature type="helix" evidence="46">
    <location>
        <begin position="817"/>
        <end position="819"/>
    </location>
</feature>
<feature type="helix" evidence="46">
    <location>
        <begin position="823"/>
        <end position="827"/>
    </location>
</feature>
<feature type="helix" evidence="46">
    <location>
        <begin position="830"/>
        <end position="832"/>
    </location>
</feature>
<feature type="helix" evidence="46">
    <location>
        <begin position="835"/>
        <end position="848"/>
    </location>
</feature>
<feature type="turn" evidence="46">
    <location>
        <begin position="849"/>
        <end position="851"/>
    </location>
</feature>
<feature type="strand" evidence="42">
    <location>
        <begin position="854"/>
        <end position="856"/>
    </location>
</feature>
<feature type="helix" evidence="46">
    <location>
        <begin position="857"/>
        <end position="863"/>
    </location>
</feature>
<feature type="helix" evidence="46">
    <location>
        <begin position="866"/>
        <end position="869"/>
    </location>
</feature>
<feature type="helix" evidence="46">
    <location>
        <begin position="874"/>
        <end position="876"/>
    </location>
</feature>
<feature type="helix" evidence="46">
    <location>
        <begin position="880"/>
        <end position="884"/>
    </location>
</feature>
<feature type="turn" evidence="48">
    <location>
        <begin position="887"/>
        <end position="890"/>
    </location>
</feature>
<feature type="helix" evidence="46">
    <location>
        <begin position="897"/>
        <end position="909"/>
    </location>
</feature>
<feature type="helix" evidence="46">
    <location>
        <begin position="911"/>
        <end position="913"/>
    </location>
</feature>
<feature type="helix" evidence="46">
    <location>
        <begin position="916"/>
        <end position="922"/>
    </location>
</feature>
<feature type="helix" evidence="46">
    <location>
        <begin position="927"/>
        <end position="936"/>
    </location>
</feature>
<feature type="helix" evidence="46">
    <location>
        <begin position="940"/>
        <end position="947"/>
    </location>
</feature>
<feature type="helix" evidence="46">
    <location>
        <begin position="948"/>
        <end position="951"/>
    </location>
</feature>
<feature type="strand" evidence="41">
    <location>
        <begin position="952"/>
        <end position="954"/>
    </location>
</feature>
<feature type="helix" evidence="46">
    <location>
        <begin position="955"/>
        <end position="957"/>
    </location>
</feature>
<feature type="turn" evidence="46">
    <location>
        <begin position="958"/>
        <end position="960"/>
    </location>
</feature>
<accession>O75460</accession>
<accession>A1L457</accession>
<accession>A8K8N8</accession>
<accession>A8MXS7</accession>
<accession>Q59EE2</accession>